<sequence length="162" mass="17557">MPETDFEEKMILIRRTARMQAGGRRFRFGALVVVGDRQGRVGLGFGKAPEVPLAVQKAGYYARRNMVEVPLQNGTIPHEIEVEFGASKIVLKPAAPGTGVIAGAVPRAILELAGVTDILTKELGSRNPINIAYATMEALRQLRTKADVERLRKGEAHAQAQG</sequence>
<organism>
    <name type="scientific">Thermus thermophilus (strain ATCC 27634 / DSM 579 / HB8)</name>
    <dbReference type="NCBI Taxonomy" id="300852"/>
    <lineage>
        <taxon>Bacteria</taxon>
        <taxon>Thermotogati</taxon>
        <taxon>Deinococcota</taxon>
        <taxon>Deinococci</taxon>
        <taxon>Thermales</taxon>
        <taxon>Thermaceae</taxon>
        <taxon>Thermus</taxon>
    </lineage>
</organism>
<reference key="1">
    <citation type="submission" date="2004-11" db="EMBL/GenBank/DDBJ databases">
        <title>Complete genome sequence of Thermus thermophilus HB8.</title>
        <authorList>
            <person name="Masui R."/>
            <person name="Kurokawa K."/>
            <person name="Nakagawa N."/>
            <person name="Tokunaga F."/>
            <person name="Koyama Y."/>
            <person name="Shibata T."/>
            <person name="Oshima T."/>
            <person name="Yokoyama S."/>
            <person name="Yasunaga T."/>
            <person name="Kuramitsu S."/>
        </authorList>
    </citation>
    <scope>NUCLEOTIDE SEQUENCE [LARGE SCALE GENOMIC DNA]</scope>
    <source>
        <strain>ATCC 27634 / DSM 579 / HB8</strain>
    </source>
</reference>
<reference key="2">
    <citation type="journal article" date="1994" name="Eur. J. Biochem.">
        <title>Purification and characterization of the 30S ribosomal proteins from the bacterium Thermus thermophilus.</title>
        <authorList>
            <person name="Tsiboli P."/>
            <person name="Herfurth E."/>
            <person name="Choli T."/>
        </authorList>
    </citation>
    <scope>PROTEIN SEQUENCE OF 2-44</scope>
</reference>
<reference key="3">
    <citation type="journal article" date="2005" name="Proteomics">
        <title>Extending ribosomal protein identifications to unsequenced bacterial strains using matrix-assisted laser desorption/ionization mass spectrometry.</title>
        <authorList>
            <person name="Suh M.-J."/>
            <person name="Hamburg D.M."/>
            <person name="Gregory S.T."/>
            <person name="Dahlberg A.E."/>
            <person name="Limbach P.A."/>
        </authorList>
    </citation>
    <scope>MASS SPECTROMETRY</scope>
    <source>
        <strain>ATCC 27634 / DSM 579 / HB8</strain>
    </source>
</reference>
<reference key="4">
    <citation type="journal article" date="1999" name="Nature">
        <title>Structure of a bacterial 30S ribosomal subunit at 5.5 A resolution.</title>
        <authorList>
            <person name="Clemons W.M. Jr."/>
            <person name="May J.L.C."/>
            <person name="Wimberly B.T."/>
            <person name="McCutcheon J.P."/>
            <person name="Capel M.S."/>
            <person name="Ramakrishnan V."/>
        </authorList>
    </citation>
    <scope>X-RAY CRYSTALLOGRAPHY (5.5 ANGSTROMS) OF THE 30S SUBUNIT</scope>
</reference>
<reference key="5">
    <citation type="journal article" date="1999" name="Proc. Natl. Acad. Sci. U.S.A.">
        <title>The small ribosomal subunit from Thermus thermophilus at 4.5 A resolution: pattern fittings and the identification of a functional site.</title>
        <authorList>
            <person name="Tocilj A."/>
            <person name="Schluenzen F."/>
            <person name="Janell D."/>
            <person name="Gluehmann M."/>
            <person name="Hansen H.A."/>
            <person name="Harms J."/>
            <person name="Bashan A."/>
            <person name="Bartels H."/>
            <person name="Agmon I."/>
            <person name="Franceschi F."/>
            <person name="Yonath A."/>
        </authorList>
    </citation>
    <scope>X-RAY CRYSTALLOGRAPHY (4.5 ANGSTROMS)</scope>
</reference>
<reference key="6">
    <citation type="journal article" date="2000" name="Nature">
        <title>Structure of the 30S ribosomal subunit.</title>
        <authorList>
            <person name="Wimberly B.T."/>
            <person name="Brodersen D.E."/>
            <person name="Clemons W.M. Jr."/>
            <person name="Morgan-Warren R.J."/>
            <person name="Carter A.P."/>
            <person name="Vonrhein C."/>
            <person name="Hartsch T."/>
            <person name="Ramakrishnan V."/>
        </authorList>
    </citation>
    <scope>X-RAY CRYSTALLOGRAPHY (3.05 ANGSTROMS) OF THE 30S SUBUNIT</scope>
</reference>
<reference key="7">
    <citation type="journal article" date="2000" name="Cell">
        <title>Structure of functionally activated small ribosomal subunit at 3.3 A resolution.</title>
        <authorList>
            <person name="Schluenzen F."/>
            <person name="Tocilj A."/>
            <person name="Zarivach R."/>
            <person name="Harms J."/>
            <person name="Gluehmann M."/>
            <person name="Janell D."/>
            <person name="Bashan A."/>
            <person name="Bartels H."/>
            <person name="Agmon I."/>
            <person name="Franceschi F."/>
            <person name="Yonath A."/>
        </authorList>
    </citation>
    <scope>X-RAY CRYSTALLOGRAPHY (3.3 ANGSTROMS) OF THE 30S SUBUNIT</scope>
</reference>
<reference key="8">
    <citation type="journal article" date="2000" name="Cell">
        <title>The structural basis for the action of the antibiotics tetracycline, pactamycin, and hygromycin B on the 30S ribosomal subunit.</title>
        <authorList>
            <person name="Brodersen D.E."/>
            <person name="Clemons W.M. Jr."/>
            <person name="Carter A.P."/>
            <person name="Morgan-Warren R.J."/>
            <person name="Wimberly B.T."/>
            <person name="Ramakrishnan V."/>
        </authorList>
    </citation>
    <scope>X-RAY CRYSTALLOGRAPHY (3.3 ANGSTROMS) OF THE 30S SUBUNIT</scope>
</reference>
<reference key="9">
    <citation type="journal article" date="2000" name="Nature">
        <title>Functional insights from the structure of the 30S ribosomal subunit and its interactions with antibiotics.</title>
        <authorList>
            <person name="Carter A.P."/>
            <person name="Clemons W.M. Jr."/>
            <person name="Brodersen D.E."/>
            <person name="Morgan-Warren R.J."/>
            <person name="Wimberly B.T."/>
            <person name="Ramakrishnan V."/>
        </authorList>
    </citation>
    <scope>X-RAY CRYSTALLOGRAPHY (3.0 ANGSTROMS) OF THE 30S SUBUNIT</scope>
</reference>
<reference key="10">
    <citation type="journal article" date="2001" name="Cell">
        <title>The path of messenger RNA through the ribosome.</title>
        <authorList>
            <person name="Yusupova G.Z."/>
            <person name="Yusupov M.M."/>
            <person name="Cate J.H.D."/>
            <person name="Noller H.F."/>
        </authorList>
    </citation>
    <scope>X-RAY CRYSTALLOGRAPHY (5.0 ANGSTROMS) OF THE RIBOSOME</scope>
</reference>
<reference key="11">
    <citation type="journal article" date="2001" name="EMBO J.">
        <title>Crystal structures of complexes of the small ribosomal subunit with tetracycline, edeine and IF3.</title>
        <authorList>
            <person name="Pioletti M."/>
            <person name="Schluenzen F."/>
            <person name="Harms J."/>
            <person name="Zarivach R."/>
            <person name="Gluehmann M."/>
            <person name="Avila H."/>
            <person name="Bashan A."/>
            <person name="Bartels H."/>
            <person name="Auerbach T."/>
            <person name="Jacobi C."/>
            <person name="Hartsch T."/>
            <person name="Yonath A."/>
            <person name="Franceschi F."/>
        </authorList>
    </citation>
    <scope>X-RAY CRYSTALLOGRAPHY (3.2 ANGSTROMS) OF THE 30S SUBUNIT</scope>
</reference>
<reference key="12">
    <citation type="journal article" date="2001" name="Science">
        <title>Crystal structure of an initiation factor bound to the 30S ribosomal subunit.</title>
        <authorList>
            <person name="Carter A.P."/>
            <person name="Clemons W.M. Jr."/>
            <person name="Brodersen D.E."/>
            <person name="Morgan-Warren R.J."/>
            <person name="Hartsch T."/>
            <person name="Wimberly B.T."/>
            <person name="Ramakrishnan V."/>
        </authorList>
    </citation>
    <scope>X-RAY CRYSTALLOGRAPHY (3.2 ANGSTROMS) OF THE 30S SUBUNIT</scope>
</reference>
<reference key="13">
    <citation type="journal article" date="2001" name="Science">
        <title>Crystal structure of the ribosome at 5.5 A resolution.</title>
        <authorList>
            <person name="Yusupov M.M."/>
            <person name="Yusupova G.Z."/>
            <person name="Baucom A."/>
            <person name="Lieberman K."/>
            <person name="Earnest T.N."/>
            <person name="Cate J.H.D."/>
            <person name="Noller H.F."/>
        </authorList>
    </citation>
    <scope>X-RAY CRYSTALLOGRAPHY (5.5 ANGSTROMS) OF THE RIBOSOME</scope>
</reference>
<reference key="14">
    <citation type="journal article" date="2001" name="Science">
        <title>Recognition of cognate transfer RNA by the 30S ribosomal subunit.</title>
        <authorList>
            <person name="Ogle J.M."/>
            <person name="Brodersen D.E."/>
            <person name="Clemons W.M. Jr."/>
            <person name="Tarry M.J."/>
            <person name="Carter A.P."/>
            <person name="Ramakrishnan V."/>
        </authorList>
    </citation>
    <scope>X-RAY CRYSTALLOGRAPHY (3.11 ANGSTROMS) OF THE 30S SUBUNIT</scope>
</reference>
<reference key="15">
    <citation type="journal article" date="2002" name="J. Mol. Biol.">
        <title>Crystal structure of the 30S ribosomal subunit from Thermus thermophilus: structure of the proteins and their interactions with 16S RNA.</title>
        <authorList>
            <person name="Brodersen D.E."/>
            <person name="Clemons W.M. Jr."/>
            <person name="Carter A.P."/>
            <person name="Wimberly B.T."/>
            <person name="Ramakrishnan V."/>
        </authorList>
    </citation>
    <scope>X-RAY CRYSTALLOGRAPHY (3.05 ANGSTROMS) OF THE 30S SUBUNIT</scope>
</reference>
<reference key="16">
    <citation type="journal article" date="2005" name="Cell">
        <title>Crystal structures of the ribosome in complex with release factors RF1 and RF2 bound to a cognate stop codon.</title>
        <authorList>
            <person name="Petry S."/>
            <person name="Brodersen D.E."/>
            <person name="Murphy F.V."/>
            <person name="Dunham C.M."/>
            <person name="Selmer M."/>
            <person name="Tarry M.J."/>
            <person name="Kelley A.C."/>
            <person name="Ramakrishnan V."/>
        </authorList>
    </citation>
    <scope>X-RAY CRYSTALLOGRAPHY (5.90 ANGSTROMS) OF 70S RIBOSOME IN COMPLEX WITH RF1 OR RF2</scope>
    <scope>SUBUNIT</scope>
</reference>
<reference key="17">
    <citation type="journal article" date="2008" name="Science">
        <title>Insights into translational termination from the structure of RF2 bound to the ribosome.</title>
        <authorList>
            <person name="Weixlbaumer A."/>
            <person name="Jin H."/>
            <person name="Neubauer C."/>
            <person name="Voorhees R.M."/>
            <person name="Petry S."/>
            <person name="Kelley A.C."/>
            <person name="Ramakrishnan V."/>
        </authorList>
    </citation>
    <scope>X-RAY CRYSTALLOGRAPHY (3.45 ANGSTROMS) OF 70S RIBOSOME IN COMPLEX WITH RF2</scope>
    <scope>SUBUNIT</scope>
</reference>
<reference key="18">
    <citation type="journal article" date="2010" name="Proc. Natl. Acad. Sci. U.S.A.">
        <title>Structure of the 70S ribosome bound to release factor 2 and a substrate analog provides insights into catalysis of peptide release.</title>
        <authorList>
            <person name="Jin H."/>
            <person name="Kelley A.C."/>
            <person name="Loakes D."/>
            <person name="Ramakrishnan V."/>
        </authorList>
    </citation>
    <scope>X-RAY CRYSTALLOGRAPHY (3.10 ANGSTROMS) OF 70S RIBOSOME IN COMPLEX WITH RF2</scope>
    <scope>SUBUNIT</scope>
</reference>
<keyword id="KW-0002">3D-structure</keyword>
<keyword id="KW-0903">Direct protein sequencing</keyword>
<keyword id="KW-1185">Reference proteome</keyword>
<keyword id="KW-0687">Ribonucleoprotein</keyword>
<keyword id="KW-0689">Ribosomal protein</keyword>
<keyword id="KW-0694">RNA-binding</keyword>
<keyword id="KW-0699">rRNA-binding</keyword>
<feature type="initiator methionine" description="Removed" evidence="3">
    <location>
        <position position="1"/>
    </location>
</feature>
<feature type="chain" id="PRO_0000131621" description="Small ribosomal subunit protein uS5">
    <location>
        <begin position="2"/>
        <end position="162"/>
    </location>
</feature>
<feature type="domain" description="S5 DRBM">
    <location>
        <begin position="6"/>
        <end position="69"/>
    </location>
</feature>
<feature type="strand" evidence="5">
    <location>
        <begin position="7"/>
        <end position="20"/>
    </location>
</feature>
<feature type="strand" evidence="5">
    <location>
        <begin position="23"/>
        <end position="35"/>
    </location>
</feature>
<feature type="strand" evidence="5">
    <location>
        <begin position="37"/>
        <end position="50"/>
    </location>
</feature>
<feature type="helix" evidence="5">
    <location>
        <begin position="51"/>
        <end position="62"/>
    </location>
</feature>
<feature type="strand" evidence="5">
    <location>
        <begin position="65"/>
        <end position="68"/>
    </location>
</feature>
<feature type="strand" evidence="6">
    <location>
        <begin position="72"/>
        <end position="75"/>
    </location>
</feature>
<feature type="strand" evidence="5">
    <location>
        <begin position="80"/>
        <end position="84"/>
    </location>
</feature>
<feature type="strand" evidence="5">
    <location>
        <begin position="87"/>
        <end position="93"/>
    </location>
</feature>
<feature type="strand" evidence="7">
    <location>
        <begin position="96"/>
        <end position="98"/>
    </location>
</feature>
<feature type="strand" evidence="5">
    <location>
        <begin position="100"/>
        <end position="102"/>
    </location>
</feature>
<feature type="helix" evidence="5">
    <location>
        <begin position="104"/>
        <end position="111"/>
    </location>
</feature>
<feature type="turn" evidence="5">
    <location>
        <begin position="112"/>
        <end position="114"/>
    </location>
</feature>
<feature type="strand" evidence="5">
    <location>
        <begin position="117"/>
        <end position="124"/>
    </location>
</feature>
<feature type="helix" evidence="5">
    <location>
        <begin position="128"/>
        <end position="141"/>
    </location>
</feature>
<feature type="helix" evidence="5">
    <location>
        <begin position="145"/>
        <end position="151"/>
    </location>
</feature>
<feature type="helix" evidence="8">
    <location>
        <begin position="154"/>
        <end position="156"/>
    </location>
</feature>
<feature type="turn" evidence="8">
    <location>
        <begin position="157"/>
        <end position="159"/>
    </location>
</feature>
<evidence type="ECO:0000250" key="1"/>
<evidence type="ECO:0000269" key="2">
    <source>
    </source>
</evidence>
<evidence type="ECO:0000269" key="3">
    <source>
    </source>
</evidence>
<evidence type="ECO:0000305" key="4"/>
<evidence type="ECO:0007829" key="5">
    <source>
        <dbReference type="PDB" id="2VQE"/>
    </source>
</evidence>
<evidence type="ECO:0007829" key="6">
    <source>
        <dbReference type="PDB" id="3T1Y"/>
    </source>
</evidence>
<evidence type="ECO:0007829" key="7">
    <source>
        <dbReference type="PDB" id="4B3S"/>
    </source>
</evidence>
<evidence type="ECO:0007829" key="8">
    <source>
        <dbReference type="PDB" id="4YHH"/>
    </source>
</evidence>
<comment type="function">
    <text evidence="1">With S4 and S12 plays an important role in translational accuracy.</text>
</comment>
<comment type="function">
    <text>Located at the back of the 30S subunit body where it stabilizes the conformation of the head with respect to the body. Binds mRNA in the 70S ribosome, positioning it for translation.</text>
</comment>
<comment type="subunit">
    <text>Part of the 30S ribosomal subunit. Contacts proteins S4 and S8.</text>
</comment>
<comment type="domain">
    <text>The N-terminal domain interacts with the head of the 30S subunit; the C-terminal domain interacts with the body and contacts protein S4. The interaction surface between S4 and S5 is involved in control of translational fidelity.</text>
</comment>
<comment type="mass spectrometry" mass="17428.0" method="MALDI" evidence="2"/>
<comment type="miscellaneous">
    <text>Is positioned such that it could physically interact with spectinomycin.</text>
</comment>
<comment type="similarity">
    <text evidence="4">Belongs to the universal ribosomal protein uS5 family.</text>
</comment>
<protein>
    <recommendedName>
        <fullName evidence="4">Small ribosomal subunit protein uS5</fullName>
    </recommendedName>
    <alternativeName>
        <fullName>30S ribosomal protein S5</fullName>
    </alternativeName>
</protein>
<proteinExistence type="evidence at protein level"/>
<accession>Q5SHQ5</accession>
<gene>
    <name type="primary">rpsE</name>
    <name type="ordered locus">TTHA1675</name>
</gene>
<dbReference type="EMBL" id="AP008226">
    <property type="protein sequence ID" value="BAD71498.1"/>
    <property type="molecule type" value="Genomic_DNA"/>
</dbReference>
<dbReference type="RefSeq" id="WP_008633389.1">
    <property type="nucleotide sequence ID" value="NC_006461.1"/>
</dbReference>
<dbReference type="RefSeq" id="YP_144941.1">
    <property type="nucleotide sequence ID" value="NC_006461.1"/>
</dbReference>
<dbReference type="PDB" id="1FJG">
    <property type="method" value="X-ray"/>
    <property type="resolution" value="3.00 A"/>
    <property type="chains" value="E=1-162"/>
</dbReference>
<dbReference type="PDB" id="1FKA">
    <property type="method" value="X-ray"/>
    <property type="resolution" value="3.30 A"/>
    <property type="chains" value="E=1-162"/>
</dbReference>
<dbReference type="PDB" id="1HNW">
    <property type="method" value="X-ray"/>
    <property type="resolution" value="3.40 A"/>
    <property type="chains" value="E=1-162"/>
</dbReference>
<dbReference type="PDB" id="1HNX">
    <property type="method" value="X-ray"/>
    <property type="resolution" value="3.40 A"/>
    <property type="chains" value="E=1-162"/>
</dbReference>
<dbReference type="PDB" id="1HNZ">
    <property type="method" value="X-ray"/>
    <property type="resolution" value="3.30 A"/>
    <property type="chains" value="E=1-162"/>
</dbReference>
<dbReference type="PDB" id="1HR0">
    <property type="method" value="X-ray"/>
    <property type="resolution" value="3.20 A"/>
    <property type="chains" value="E=1-162"/>
</dbReference>
<dbReference type="PDB" id="1I94">
    <property type="method" value="X-ray"/>
    <property type="resolution" value="3.20 A"/>
    <property type="chains" value="E=2-162"/>
</dbReference>
<dbReference type="PDB" id="1I95">
    <property type="method" value="X-ray"/>
    <property type="resolution" value="4.50 A"/>
    <property type="chains" value="E=2-162"/>
</dbReference>
<dbReference type="PDB" id="1I96">
    <property type="method" value="X-ray"/>
    <property type="resolution" value="4.20 A"/>
    <property type="chains" value="E=2-162"/>
</dbReference>
<dbReference type="PDB" id="1I97">
    <property type="method" value="X-ray"/>
    <property type="resolution" value="4.50 A"/>
    <property type="chains" value="E=2-162"/>
</dbReference>
<dbReference type="PDB" id="1IBK">
    <property type="method" value="X-ray"/>
    <property type="resolution" value="3.31 A"/>
    <property type="chains" value="E=1-162"/>
</dbReference>
<dbReference type="PDB" id="1IBL">
    <property type="method" value="X-ray"/>
    <property type="resolution" value="3.11 A"/>
    <property type="chains" value="E=1-162"/>
</dbReference>
<dbReference type="PDB" id="1IBM">
    <property type="method" value="X-ray"/>
    <property type="resolution" value="3.31 A"/>
    <property type="chains" value="E=1-162"/>
</dbReference>
<dbReference type="PDB" id="1J5E">
    <property type="method" value="X-ray"/>
    <property type="resolution" value="3.05 A"/>
    <property type="chains" value="E=2-162"/>
</dbReference>
<dbReference type="PDB" id="1JGO">
    <property type="method" value="X-ray"/>
    <property type="resolution" value="5.60 A"/>
    <property type="chains" value="H=1-162"/>
</dbReference>
<dbReference type="PDB" id="1JGP">
    <property type="method" value="X-ray"/>
    <property type="resolution" value="7.00 A"/>
    <property type="chains" value="H=1-162"/>
</dbReference>
<dbReference type="PDB" id="1JGQ">
    <property type="method" value="X-ray"/>
    <property type="resolution" value="5.00 A"/>
    <property type="chains" value="H=1-162"/>
</dbReference>
<dbReference type="PDB" id="1ML5">
    <property type="method" value="EM"/>
    <property type="resolution" value="14.00 A"/>
    <property type="chains" value="H=1-162"/>
</dbReference>
<dbReference type="PDB" id="1N32">
    <property type="method" value="X-ray"/>
    <property type="resolution" value="3.00 A"/>
    <property type="chains" value="E=2-162"/>
</dbReference>
<dbReference type="PDB" id="1N33">
    <property type="method" value="X-ray"/>
    <property type="resolution" value="3.35 A"/>
    <property type="chains" value="E=2-162"/>
</dbReference>
<dbReference type="PDB" id="1N34">
    <property type="method" value="X-ray"/>
    <property type="resolution" value="3.80 A"/>
    <property type="chains" value="E=2-162"/>
</dbReference>
<dbReference type="PDB" id="1N36">
    <property type="method" value="X-ray"/>
    <property type="resolution" value="3.65 A"/>
    <property type="chains" value="E=2-162"/>
</dbReference>
<dbReference type="PDB" id="1QD7">
    <property type="method" value="X-ray"/>
    <property type="resolution" value="5.50 A"/>
    <property type="chains" value="D=22-130"/>
</dbReference>
<dbReference type="PDB" id="1VVJ">
    <property type="method" value="X-ray"/>
    <property type="resolution" value="3.44 A"/>
    <property type="chains" value="QE/XE=1-162"/>
</dbReference>
<dbReference type="PDB" id="1VY4">
    <property type="method" value="X-ray"/>
    <property type="resolution" value="2.60 A"/>
    <property type="chains" value="AE/CE=1-162"/>
</dbReference>
<dbReference type="PDB" id="1VY5">
    <property type="method" value="X-ray"/>
    <property type="resolution" value="2.55 A"/>
    <property type="chains" value="AE/CE=1-162"/>
</dbReference>
<dbReference type="PDB" id="1VY6">
    <property type="method" value="X-ray"/>
    <property type="resolution" value="2.90 A"/>
    <property type="chains" value="AE/CE=1-162"/>
</dbReference>
<dbReference type="PDB" id="1VY7">
    <property type="method" value="X-ray"/>
    <property type="resolution" value="2.80 A"/>
    <property type="chains" value="AE/CE=1-162"/>
</dbReference>
<dbReference type="PDB" id="1XMO">
    <property type="method" value="X-ray"/>
    <property type="resolution" value="3.25 A"/>
    <property type="chains" value="E=1-162"/>
</dbReference>
<dbReference type="PDB" id="1XMQ">
    <property type="method" value="X-ray"/>
    <property type="resolution" value="3.00 A"/>
    <property type="chains" value="E=1-162"/>
</dbReference>
<dbReference type="PDB" id="1XNQ">
    <property type="method" value="X-ray"/>
    <property type="resolution" value="3.05 A"/>
    <property type="chains" value="E=1-162"/>
</dbReference>
<dbReference type="PDB" id="1XNR">
    <property type="method" value="X-ray"/>
    <property type="resolution" value="3.10 A"/>
    <property type="chains" value="E=1-162"/>
</dbReference>
<dbReference type="PDB" id="2E5L">
    <property type="method" value="X-ray"/>
    <property type="resolution" value="3.30 A"/>
    <property type="chains" value="E=2-162"/>
</dbReference>
<dbReference type="PDB" id="2F4V">
    <property type="method" value="X-ray"/>
    <property type="resolution" value="3.80 A"/>
    <property type="chains" value="E=1-162"/>
</dbReference>
<dbReference type="PDB" id="2HHH">
    <property type="method" value="X-ray"/>
    <property type="resolution" value="3.35 A"/>
    <property type="chains" value="E=1-162"/>
</dbReference>
<dbReference type="PDB" id="2UU9">
    <property type="method" value="X-ray"/>
    <property type="resolution" value="3.10 A"/>
    <property type="chains" value="E=2-162"/>
</dbReference>
<dbReference type="PDB" id="2UUA">
    <property type="method" value="X-ray"/>
    <property type="resolution" value="2.90 A"/>
    <property type="chains" value="E=2-162"/>
</dbReference>
<dbReference type="PDB" id="2UUB">
    <property type="method" value="X-ray"/>
    <property type="resolution" value="2.80 A"/>
    <property type="chains" value="E=2-162"/>
</dbReference>
<dbReference type="PDB" id="2UUC">
    <property type="method" value="X-ray"/>
    <property type="resolution" value="3.10 A"/>
    <property type="chains" value="E=2-162"/>
</dbReference>
<dbReference type="PDB" id="2UXB">
    <property type="method" value="X-ray"/>
    <property type="resolution" value="3.10 A"/>
    <property type="chains" value="E=2-162"/>
</dbReference>
<dbReference type="PDB" id="2UXC">
    <property type="method" value="X-ray"/>
    <property type="resolution" value="2.90 A"/>
    <property type="chains" value="E=2-162"/>
</dbReference>
<dbReference type="PDB" id="2UXD">
    <property type="method" value="X-ray"/>
    <property type="resolution" value="3.20 A"/>
    <property type="chains" value="E=2-162"/>
</dbReference>
<dbReference type="PDB" id="2VQE">
    <property type="method" value="X-ray"/>
    <property type="resolution" value="2.50 A"/>
    <property type="chains" value="E=1-162"/>
</dbReference>
<dbReference type="PDB" id="2VQF">
    <property type="method" value="X-ray"/>
    <property type="resolution" value="2.90 A"/>
    <property type="chains" value="E=1-162"/>
</dbReference>
<dbReference type="PDB" id="2ZM6">
    <property type="method" value="X-ray"/>
    <property type="resolution" value="3.30 A"/>
    <property type="chains" value="E=2-162"/>
</dbReference>
<dbReference type="PDB" id="3OTO">
    <property type="method" value="X-ray"/>
    <property type="resolution" value="3.69 A"/>
    <property type="chains" value="E=1-162"/>
</dbReference>
<dbReference type="PDB" id="3T1H">
    <property type="method" value="X-ray"/>
    <property type="resolution" value="3.11 A"/>
    <property type="chains" value="E=1-162"/>
</dbReference>
<dbReference type="PDB" id="3T1Y">
    <property type="method" value="X-ray"/>
    <property type="resolution" value="2.80 A"/>
    <property type="chains" value="E=1-162"/>
</dbReference>
<dbReference type="PDB" id="4AQY">
    <property type="method" value="X-ray"/>
    <property type="resolution" value="3.50 A"/>
    <property type="chains" value="E=2-162"/>
</dbReference>
<dbReference type="PDB" id="4B3M">
    <property type="method" value="X-ray"/>
    <property type="resolution" value="2.90 A"/>
    <property type="chains" value="E=2-162"/>
</dbReference>
<dbReference type="PDB" id="4B3R">
    <property type="method" value="X-ray"/>
    <property type="resolution" value="3.00 A"/>
    <property type="chains" value="E=2-162"/>
</dbReference>
<dbReference type="PDB" id="4B3S">
    <property type="method" value="X-ray"/>
    <property type="resolution" value="3.15 A"/>
    <property type="chains" value="E=2-162"/>
</dbReference>
<dbReference type="PDB" id="4B3T">
    <property type="method" value="X-ray"/>
    <property type="resolution" value="3.00 A"/>
    <property type="chains" value="E=2-162"/>
</dbReference>
<dbReference type="PDB" id="4DR1">
    <property type="method" value="X-ray"/>
    <property type="resolution" value="3.60 A"/>
    <property type="chains" value="E=1-162"/>
</dbReference>
<dbReference type="PDB" id="4DR2">
    <property type="method" value="X-ray"/>
    <property type="resolution" value="3.25 A"/>
    <property type="chains" value="E=1-162"/>
</dbReference>
<dbReference type="PDB" id="4DR3">
    <property type="method" value="X-ray"/>
    <property type="resolution" value="3.35 A"/>
    <property type="chains" value="E=1-162"/>
</dbReference>
<dbReference type="PDB" id="4DR4">
    <property type="method" value="X-ray"/>
    <property type="resolution" value="3.97 A"/>
    <property type="chains" value="E=1-162"/>
</dbReference>
<dbReference type="PDB" id="4DR5">
    <property type="method" value="X-ray"/>
    <property type="resolution" value="3.45 A"/>
    <property type="chains" value="E=1-162"/>
</dbReference>
<dbReference type="PDB" id="4DR6">
    <property type="method" value="X-ray"/>
    <property type="resolution" value="3.30 A"/>
    <property type="chains" value="E=1-162"/>
</dbReference>
<dbReference type="PDB" id="4DR7">
    <property type="method" value="X-ray"/>
    <property type="resolution" value="3.75 A"/>
    <property type="chains" value="E=1-162"/>
</dbReference>
<dbReference type="PDB" id="4DUY">
    <property type="method" value="X-ray"/>
    <property type="resolution" value="3.39 A"/>
    <property type="chains" value="E=1-162"/>
</dbReference>
<dbReference type="PDB" id="4DUZ">
    <property type="method" value="X-ray"/>
    <property type="resolution" value="3.65 A"/>
    <property type="chains" value="E=1-162"/>
</dbReference>
<dbReference type="PDB" id="4DV0">
    <property type="method" value="X-ray"/>
    <property type="resolution" value="3.85 A"/>
    <property type="chains" value="E=1-162"/>
</dbReference>
<dbReference type="PDB" id="4DV1">
    <property type="method" value="X-ray"/>
    <property type="resolution" value="3.85 A"/>
    <property type="chains" value="E=1-162"/>
</dbReference>
<dbReference type="PDB" id="4DV2">
    <property type="method" value="X-ray"/>
    <property type="resolution" value="3.65 A"/>
    <property type="chains" value="E=1-162"/>
</dbReference>
<dbReference type="PDB" id="4DV3">
    <property type="method" value="X-ray"/>
    <property type="resolution" value="3.55 A"/>
    <property type="chains" value="E=1-162"/>
</dbReference>
<dbReference type="PDB" id="4DV4">
    <property type="method" value="X-ray"/>
    <property type="resolution" value="3.65 A"/>
    <property type="chains" value="E=1-162"/>
</dbReference>
<dbReference type="PDB" id="4DV5">
    <property type="method" value="X-ray"/>
    <property type="resolution" value="3.68 A"/>
    <property type="chains" value="E=1-162"/>
</dbReference>
<dbReference type="PDB" id="4DV6">
    <property type="method" value="X-ray"/>
    <property type="resolution" value="3.30 A"/>
    <property type="chains" value="E=1-162"/>
</dbReference>
<dbReference type="PDB" id="4DV7">
    <property type="method" value="X-ray"/>
    <property type="resolution" value="3.29 A"/>
    <property type="chains" value="E=1-162"/>
</dbReference>
<dbReference type="PDB" id="4GKJ">
    <property type="method" value="X-ray"/>
    <property type="resolution" value="3.30 A"/>
    <property type="chains" value="E=5-154"/>
</dbReference>
<dbReference type="PDB" id="4GKK">
    <property type="method" value="X-ray"/>
    <property type="resolution" value="3.20 A"/>
    <property type="chains" value="E=5-154"/>
</dbReference>
<dbReference type="PDB" id="4JI0">
    <property type="method" value="X-ray"/>
    <property type="resolution" value="3.49 A"/>
    <property type="chains" value="E=1-162"/>
</dbReference>
<dbReference type="PDB" id="4JI1">
    <property type="method" value="X-ray"/>
    <property type="resolution" value="3.14 A"/>
    <property type="chains" value="E=1-162"/>
</dbReference>
<dbReference type="PDB" id="4JI2">
    <property type="method" value="X-ray"/>
    <property type="resolution" value="3.64 A"/>
    <property type="chains" value="E=1-162"/>
</dbReference>
<dbReference type="PDB" id="4JI3">
    <property type="method" value="X-ray"/>
    <property type="resolution" value="3.35 A"/>
    <property type="chains" value="E=1-162"/>
</dbReference>
<dbReference type="PDB" id="4JI4">
    <property type="method" value="X-ray"/>
    <property type="resolution" value="3.69 A"/>
    <property type="chains" value="E=1-162"/>
</dbReference>
<dbReference type="PDB" id="4JI5">
    <property type="method" value="X-ray"/>
    <property type="resolution" value="3.85 A"/>
    <property type="chains" value="E=1-162"/>
</dbReference>
<dbReference type="PDB" id="4JI6">
    <property type="method" value="X-ray"/>
    <property type="resolution" value="3.55 A"/>
    <property type="chains" value="E=1-162"/>
</dbReference>
<dbReference type="PDB" id="4JI7">
    <property type="method" value="X-ray"/>
    <property type="resolution" value="3.50 A"/>
    <property type="chains" value="E=1-162"/>
</dbReference>
<dbReference type="PDB" id="4JI8">
    <property type="method" value="X-ray"/>
    <property type="resolution" value="3.74 A"/>
    <property type="chains" value="E=1-162"/>
</dbReference>
<dbReference type="PDB" id="4JV5">
    <property type="method" value="X-ray"/>
    <property type="resolution" value="3.16 A"/>
    <property type="chains" value="E=5-154"/>
</dbReference>
<dbReference type="PDB" id="4JYA">
    <property type="method" value="X-ray"/>
    <property type="resolution" value="3.10 A"/>
    <property type="chains" value="E=5-154"/>
</dbReference>
<dbReference type="PDB" id="4K0K">
    <property type="method" value="X-ray"/>
    <property type="resolution" value="3.40 A"/>
    <property type="chains" value="E=5-155"/>
</dbReference>
<dbReference type="PDB" id="4KHP">
    <property type="method" value="X-ray"/>
    <property type="resolution" value="3.10 A"/>
    <property type="chains" value="E=5-154"/>
</dbReference>
<dbReference type="PDB" id="4L47">
    <property type="method" value="X-ray"/>
    <property type="resolution" value="3.22 A"/>
    <property type="chains" value="QE/XE=1-162"/>
</dbReference>
<dbReference type="PDB" id="4L71">
    <property type="method" value="X-ray"/>
    <property type="resolution" value="3.90 A"/>
    <property type="chains" value="QE/XE=1-162"/>
</dbReference>
<dbReference type="PDB" id="4LEL">
    <property type="method" value="X-ray"/>
    <property type="resolution" value="3.90 A"/>
    <property type="chains" value="QE/XE=1-162"/>
</dbReference>
<dbReference type="PDB" id="4LF4">
    <property type="method" value="X-ray"/>
    <property type="resolution" value="3.34 A"/>
    <property type="chains" value="E=1-162"/>
</dbReference>
<dbReference type="PDB" id="4LF5">
    <property type="method" value="X-ray"/>
    <property type="resolution" value="3.75 A"/>
    <property type="chains" value="E=1-162"/>
</dbReference>
<dbReference type="PDB" id="4LF6">
    <property type="method" value="X-ray"/>
    <property type="resolution" value="3.31 A"/>
    <property type="chains" value="E=1-162"/>
</dbReference>
<dbReference type="PDB" id="4LF7">
    <property type="method" value="X-ray"/>
    <property type="resolution" value="3.15 A"/>
    <property type="chains" value="E=1-162"/>
</dbReference>
<dbReference type="PDB" id="4LF8">
    <property type="method" value="X-ray"/>
    <property type="resolution" value="3.15 A"/>
    <property type="chains" value="E=1-162"/>
</dbReference>
<dbReference type="PDB" id="4LF9">
    <property type="method" value="X-ray"/>
    <property type="resolution" value="3.28 A"/>
    <property type="chains" value="E=1-162"/>
</dbReference>
<dbReference type="PDB" id="4LFA">
    <property type="method" value="X-ray"/>
    <property type="resolution" value="3.65 A"/>
    <property type="chains" value="E=1-162"/>
</dbReference>
<dbReference type="PDB" id="4LFB">
    <property type="method" value="X-ray"/>
    <property type="resolution" value="3.01 A"/>
    <property type="chains" value="E=1-162"/>
</dbReference>
<dbReference type="PDB" id="4LFC">
    <property type="method" value="X-ray"/>
    <property type="resolution" value="3.60 A"/>
    <property type="chains" value="E=1-162"/>
</dbReference>
<dbReference type="PDB" id="4LFZ">
    <property type="method" value="X-ray"/>
    <property type="resolution" value="3.92 A"/>
    <property type="chains" value="QE/XE=1-162"/>
</dbReference>
<dbReference type="PDB" id="4LNT">
    <property type="method" value="X-ray"/>
    <property type="resolution" value="2.94 A"/>
    <property type="chains" value="QE/XE=1-162"/>
</dbReference>
<dbReference type="PDB" id="4LSK">
    <property type="method" value="X-ray"/>
    <property type="resolution" value="3.48 A"/>
    <property type="chains" value="QE/XE=1-162"/>
</dbReference>
<dbReference type="PDB" id="4LT8">
    <property type="method" value="X-ray"/>
    <property type="resolution" value="3.14 A"/>
    <property type="chains" value="QE/XE=1-162"/>
</dbReference>
<dbReference type="PDB" id="4NXM">
    <property type="method" value="X-ray"/>
    <property type="resolution" value="3.65 A"/>
    <property type="chains" value="E=1-162"/>
</dbReference>
<dbReference type="PDB" id="4NXN">
    <property type="method" value="X-ray"/>
    <property type="resolution" value="3.54 A"/>
    <property type="chains" value="E=1-162"/>
</dbReference>
<dbReference type="PDB" id="4OX9">
    <property type="method" value="X-ray"/>
    <property type="resolution" value="3.80 A"/>
    <property type="chains" value="E=2-162"/>
</dbReference>
<dbReference type="PDB" id="4P6F">
    <property type="method" value="X-ray"/>
    <property type="resolution" value="3.60 A"/>
    <property type="chains" value="QE/XE=1-162"/>
</dbReference>
<dbReference type="PDB" id="4P70">
    <property type="method" value="X-ray"/>
    <property type="resolution" value="3.68 A"/>
    <property type="chains" value="QE/XE=1-162"/>
</dbReference>
<dbReference type="PDB" id="4TUA">
    <property type="method" value="X-ray"/>
    <property type="resolution" value="3.60 A"/>
    <property type="chains" value="QE/XE=1-162"/>
</dbReference>
<dbReference type="PDB" id="4TUB">
    <property type="method" value="X-ray"/>
    <property type="resolution" value="3.60 A"/>
    <property type="chains" value="QE/XE=1-162"/>
</dbReference>
<dbReference type="PDB" id="4TUC">
    <property type="method" value="X-ray"/>
    <property type="resolution" value="3.60 A"/>
    <property type="chains" value="QE/XE=1-162"/>
</dbReference>
<dbReference type="PDB" id="4TUD">
    <property type="method" value="X-ray"/>
    <property type="resolution" value="3.60 A"/>
    <property type="chains" value="QE/XE=1-162"/>
</dbReference>
<dbReference type="PDB" id="4TUE">
    <property type="method" value="X-ray"/>
    <property type="resolution" value="3.50 A"/>
    <property type="chains" value="QE/XE=1-162"/>
</dbReference>
<dbReference type="PDB" id="4V42">
    <property type="method" value="X-ray"/>
    <property type="resolution" value="5.50 A"/>
    <property type="chains" value="AH=1-162"/>
</dbReference>
<dbReference type="PDB" id="4V49">
    <property type="method" value="X-ray"/>
    <property type="resolution" value="8.70 A"/>
    <property type="chains" value="E=5-154"/>
</dbReference>
<dbReference type="PDB" id="4V4A">
    <property type="method" value="X-ray"/>
    <property type="resolution" value="9.50 A"/>
    <property type="chains" value="E=5-154"/>
</dbReference>
<dbReference type="PDB" id="4V4G">
    <property type="method" value="X-ray"/>
    <property type="resolution" value="11.50 A"/>
    <property type="chains" value="E=5-154"/>
</dbReference>
<dbReference type="PDB" id="4V4I">
    <property type="method" value="X-ray"/>
    <property type="resolution" value="3.71 A"/>
    <property type="chains" value="f=-"/>
</dbReference>
<dbReference type="PDB" id="4V4P">
    <property type="method" value="X-ray"/>
    <property type="resolution" value="5.50 A"/>
    <property type="chains" value="BH=1-162"/>
</dbReference>
<dbReference type="PDB" id="4V4R">
    <property type="method" value="X-ray"/>
    <property type="resolution" value="5.90 A"/>
    <property type="chains" value="AE=1-162"/>
</dbReference>
<dbReference type="PDB" id="4V4S">
    <property type="method" value="X-ray"/>
    <property type="resolution" value="6.76 A"/>
    <property type="chains" value="AE=1-162"/>
</dbReference>
<dbReference type="PDB" id="4V4T">
    <property type="method" value="X-ray"/>
    <property type="resolution" value="6.46 A"/>
    <property type="chains" value="AE=1-162"/>
</dbReference>
<dbReference type="PDB" id="4V4X">
    <property type="method" value="X-ray"/>
    <property type="resolution" value="5.00 A"/>
    <property type="chains" value="AH=1-162"/>
</dbReference>
<dbReference type="PDB" id="4V4Y">
    <property type="method" value="X-ray"/>
    <property type="resolution" value="5.50 A"/>
    <property type="chains" value="AH=1-162"/>
</dbReference>
<dbReference type="PDB" id="4V4Z">
    <property type="method" value="X-ray"/>
    <property type="resolution" value="4.51 A"/>
    <property type="chains" value="AH=1-162"/>
</dbReference>
<dbReference type="PDB" id="4V51">
    <property type="method" value="X-ray"/>
    <property type="resolution" value="2.80 A"/>
    <property type="chains" value="AE/CE=2-162"/>
</dbReference>
<dbReference type="PDB" id="4V5A">
    <property type="method" value="X-ray"/>
    <property type="resolution" value="3.50 A"/>
    <property type="chains" value="AE/CE=2-162"/>
</dbReference>
<dbReference type="PDB" id="4V5C">
    <property type="method" value="X-ray"/>
    <property type="resolution" value="3.30 A"/>
    <property type="chains" value="AE/CE=1-162"/>
</dbReference>
<dbReference type="PDB" id="4V5D">
    <property type="method" value="X-ray"/>
    <property type="resolution" value="3.50 A"/>
    <property type="chains" value="AE/CE=1-162"/>
</dbReference>
<dbReference type="PDB" id="4V5E">
    <property type="method" value="X-ray"/>
    <property type="resolution" value="3.45 A"/>
    <property type="chains" value="AE/CE=1-162"/>
</dbReference>
<dbReference type="PDB" id="4V5F">
    <property type="method" value="X-ray"/>
    <property type="resolution" value="3.60 A"/>
    <property type="chains" value="AE/CE=1-162"/>
</dbReference>
<dbReference type="PDB" id="4V5G">
    <property type="method" value="X-ray"/>
    <property type="resolution" value="3.60 A"/>
    <property type="chains" value="AE/CE=1-162"/>
</dbReference>
<dbReference type="PDB" id="4V5J">
    <property type="method" value="X-ray"/>
    <property type="resolution" value="3.10 A"/>
    <property type="chains" value="AE/CE=1-162"/>
</dbReference>
<dbReference type="PDB" id="4V5K">
    <property type="method" value="X-ray"/>
    <property type="resolution" value="3.20 A"/>
    <property type="chains" value="AE/CE=1-162"/>
</dbReference>
<dbReference type="PDB" id="4V5L">
    <property type="method" value="X-ray"/>
    <property type="resolution" value="3.10 A"/>
    <property type="chains" value="AE=1-162"/>
</dbReference>
<dbReference type="PDB" id="4V5M">
    <property type="method" value="EM"/>
    <property type="resolution" value="7.80 A"/>
    <property type="chains" value="AE=1-162"/>
</dbReference>
<dbReference type="PDB" id="4V5N">
    <property type="method" value="EM"/>
    <property type="resolution" value="7.60 A"/>
    <property type="chains" value="AE=1-162"/>
</dbReference>
<dbReference type="PDB" id="4V5P">
    <property type="method" value="X-ray"/>
    <property type="resolution" value="3.10 A"/>
    <property type="chains" value="AE/CE=1-162"/>
</dbReference>
<dbReference type="PDB" id="4V5Q">
    <property type="method" value="X-ray"/>
    <property type="resolution" value="3.10 A"/>
    <property type="chains" value="AE/CE=1-162"/>
</dbReference>
<dbReference type="PDB" id="4V5R">
    <property type="method" value="X-ray"/>
    <property type="resolution" value="3.10 A"/>
    <property type="chains" value="AE/CE=1-162"/>
</dbReference>
<dbReference type="PDB" id="4V5S">
    <property type="method" value="X-ray"/>
    <property type="resolution" value="3.10 A"/>
    <property type="chains" value="AE/CE=1-162"/>
</dbReference>
<dbReference type="PDB" id="4V68">
    <property type="method" value="EM"/>
    <property type="resolution" value="6.40 A"/>
    <property type="chains" value="AE=5-155"/>
</dbReference>
<dbReference type="PDB" id="4V6A">
    <property type="method" value="X-ray"/>
    <property type="resolution" value="3.10 A"/>
    <property type="chains" value="AE/CE=1-162"/>
</dbReference>
<dbReference type="PDB" id="4V6F">
    <property type="method" value="X-ray"/>
    <property type="resolution" value="3.10 A"/>
    <property type="chains" value="BH/CH=1-162"/>
</dbReference>
<dbReference type="PDB" id="4V6G">
    <property type="method" value="X-ray"/>
    <property type="resolution" value="3.50 A"/>
    <property type="chains" value="AH/CH=1-162"/>
</dbReference>
<dbReference type="PDB" id="4V7J">
    <property type="method" value="X-ray"/>
    <property type="resolution" value="3.30 A"/>
    <property type="chains" value="Ae/Be=1-162"/>
</dbReference>
<dbReference type="PDB" id="4V7K">
    <property type="method" value="X-ray"/>
    <property type="resolution" value="3.60 A"/>
    <property type="chains" value="Ae/Be=1-162"/>
</dbReference>
<dbReference type="PDB" id="4V7L">
    <property type="method" value="X-ray"/>
    <property type="resolution" value="3.00 A"/>
    <property type="chains" value="AE/CE=1-162"/>
</dbReference>
<dbReference type="PDB" id="4V7M">
    <property type="method" value="X-ray"/>
    <property type="resolution" value="3.45 A"/>
    <property type="chains" value="AE/CE=1-162"/>
</dbReference>
<dbReference type="PDB" id="4V7W">
    <property type="method" value="X-ray"/>
    <property type="resolution" value="3.00 A"/>
    <property type="chains" value="AE/CE=1-162"/>
</dbReference>
<dbReference type="PDB" id="4V7X">
    <property type="method" value="X-ray"/>
    <property type="resolution" value="3.00 A"/>
    <property type="chains" value="AE/CE=1-160"/>
</dbReference>
<dbReference type="PDB" id="4V7Y">
    <property type="method" value="X-ray"/>
    <property type="resolution" value="3.00 A"/>
    <property type="chains" value="AE/CE=1-162"/>
</dbReference>
<dbReference type="PDB" id="4V7Z">
    <property type="method" value="X-ray"/>
    <property type="resolution" value="3.10 A"/>
    <property type="chains" value="AE/CE=1-162"/>
</dbReference>
<dbReference type="PDB" id="4V87">
    <property type="method" value="X-ray"/>
    <property type="resolution" value="3.10 A"/>
    <property type="chains" value="BH/CH=1-162"/>
</dbReference>
<dbReference type="PDB" id="4V8A">
    <property type="method" value="X-ray"/>
    <property type="resolution" value="3.20 A"/>
    <property type="chains" value="CE/DE=1-162"/>
</dbReference>
<dbReference type="PDB" id="4V8B">
    <property type="method" value="X-ray"/>
    <property type="resolution" value="3.00 A"/>
    <property type="chains" value="AH/CH=1-162"/>
</dbReference>
<dbReference type="PDB" id="4V8C">
    <property type="method" value="X-ray"/>
    <property type="resolution" value="3.30 A"/>
    <property type="chains" value="CH/DH=1-162"/>
</dbReference>
<dbReference type="PDB" id="4V8D">
    <property type="method" value="X-ray"/>
    <property type="resolution" value="3.00 A"/>
    <property type="chains" value="AH/CH=1-162"/>
</dbReference>
<dbReference type="PDB" id="4V8E">
    <property type="method" value="X-ray"/>
    <property type="resolution" value="3.30 A"/>
    <property type="chains" value="BH/DH=1-162"/>
</dbReference>
<dbReference type="PDB" id="4V8F">
    <property type="method" value="X-ray"/>
    <property type="resolution" value="3.30 A"/>
    <property type="chains" value="BH/CH=1-162"/>
</dbReference>
<dbReference type="PDB" id="4V8G">
    <property type="method" value="X-ray"/>
    <property type="resolution" value="3.00 A"/>
    <property type="chains" value="AE/CE=1-162"/>
</dbReference>
<dbReference type="PDB" id="4V8H">
    <property type="method" value="X-ray"/>
    <property type="resolution" value="3.10 A"/>
    <property type="chains" value="AE/CE=1-162"/>
</dbReference>
<dbReference type="PDB" id="4V8I">
    <property type="method" value="X-ray"/>
    <property type="resolution" value="2.70 A"/>
    <property type="chains" value="AE/CE=1-162"/>
</dbReference>
<dbReference type="PDB" id="4V8J">
    <property type="method" value="X-ray"/>
    <property type="resolution" value="3.90 A"/>
    <property type="chains" value="AE/CE=1-162"/>
</dbReference>
<dbReference type="PDB" id="4V8N">
    <property type="method" value="X-ray"/>
    <property type="resolution" value="3.10 A"/>
    <property type="chains" value="AE/CE=1-162"/>
</dbReference>
<dbReference type="PDB" id="4V8O">
    <property type="method" value="X-ray"/>
    <property type="resolution" value="3.80 A"/>
    <property type="chains" value="AE=1-162"/>
</dbReference>
<dbReference type="PDB" id="4V8Q">
    <property type="method" value="X-ray"/>
    <property type="resolution" value="3.10 A"/>
    <property type="chains" value="BE=1-162"/>
</dbReference>
<dbReference type="PDB" id="4V8U">
    <property type="method" value="X-ray"/>
    <property type="resolution" value="3.70 A"/>
    <property type="chains" value="AE/CE=1-162"/>
</dbReference>
<dbReference type="PDB" id="4V8X">
    <property type="method" value="X-ray"/>
    <property type="resolution" value="3.35 A"/>
    <property type="chains" value="AE/CE=1-162"/>
</dbReference>
<dbReference type="PDB" id="4V90">
    <property type="method" value="X-ray"/>
    <property type="resolution" value="2.95 A"/>
    <property type="chains" value="AE=1-162"/>
</dbReference>
<dbReference type="PDB" id="4V95">
    <property type="method" value="X-ray"/>
    <property type="resolution" value="3.20 A"/>
    <property type="chains" value="AE/CE=1-162"/>
</dbReference>
<dbReference type="PDB" id="4V97">
    <property type="method" value="X-ray"/>
    <property type="resolution" value="3.52 A"/>
    <property type="chains" value="AE/CE=1-162"/>
</dbReference>
<dbReference type="PDB" id="4V9A">
    <property type="method" value="X-ray"/>
    <property type="resolution" value="3.30 A"/>
    <property type="chains" value="AH/CH=1-162"/>
</dbReference>
<dbReference type="PDB" id="4V9B">
    <property type="method" value="X-ray"/>
    <property type="resolution" value="3.10 A"/>
    <property type="chains" value="AH/CH=1-162"/>
</dbReference>
<dbReference type="PDB" id="4V9H">
    <property type="method" value="X-ray"/>
    <property type="resolution" value="2.86 A"/>
    <property type="chains" value="AE=5-154"/>
</dbReference>
<dbReference type="PDB" id="4V9I">
    <property type="method" value="X-ray"/>
    <property type="resolution" value="3.30 A"/>
    <property type="chains" value="AE/CE=5-154"/>
</dbReference>
<dbReference type="PDB" id="4V9R">
    <property type="method" value="X-ray"/>
    <property type="resolution" value="3.00 A"/>
    <property type="chains" value="AE/CE=1-162"/>
</dbReference>
<dbReference type="PDB" id="4V9S">
    <property type="method" value="X-ray"/>
    <property type="resolution" value="3.10 A"/>
    <property type="chains" value="AE/CE=1-162"/>
</dbReference>
<dbReference type="PDB" id="4W2E">
    <property type="method" value="X-ray"/>
    <property type="resolution" value="2.90 A"/>
    <property type="chains" value="e=1-162"/>
</dbReference>
<dbReference type="PDB" id="4W2F">
    <property type="method" value="X-ray"/>
    <property type="resolution" value="2.40 A"/>
    <property type="chains" value="AE/CE=1-162"/>
</dbReference>
<dbReference type="PDB" id="4W2G">
    <property type="method" value="X-ray"/>
    <property type="resolution" value="2.55 A"/>
    <property type="chains" value="AE/CE=1-162"/>
</dbReference>
<dbReference type="PDB" id="4W2H">
    <property type="method" value="X-ray"/>
    <property type="resolution" value="2.70 A"/>
    <property type="chains" value="AE/CE=1-162"/>
</dbReference>
<dbReference type="PDB" id="4W2I">
    <property type="method" value="X-ray"/>
    <property type="resolution" value="2.70 A"/>
    <property type="chains" value="AE/CE=1-162"/>
</dbReference>
<dbReference type="PDB" id="4W4G">
    <property type="method" value="X-ray"/>
    <property type="resolution" value="3.30 A"/>
    <property type="chains" value="QE/XE=1-162"/>
</dbReference>
<dbReference type="PDB" id="4WPO">
    <property type="method" value="X-ray"/>
    <property type="resolution" value="2.80 A"/>
    <property type="chains" value="BE/DE=1-162"/>
</dbReference>
<dbReference type="PDB" id="4WQ1">
    <property type="method" value="X-ray"/>
    <property type="resolution" value="3.10 A"/>
    <property type="chains" value="42/4E=1-162"/>
</dbReference>
<dbReference type="PDB" id="4WQF">
    <property type="method" value="X-ray"/>
    <property type="resolution" value="2.80 A"/>
    <property type="chains" value="BE/DE=1-162"/>
</dbReference>
<dbReference type="PDB" id="4WQR">
    <property type="method" value="X-ray"/>
    <property type="resolution" value="3.15 A"/>
    <property type="chains" value="42/4E=1-162"/>
</dbReference>
<dbReference type="PDB" id="4WQU">
    <property type="method" value="X-ray"/>
    <property type="resolution" value="2.80 A"/>
    <property type="chains" value="BE/DE=1-162"/>
</dbReference>
<dbReference type="PDB" id="4WQY">
    <property type="method" value="X-ray"/>
    <property type="resolution" value="2.80 A"/>
    <property type="chains" value="BE/DE=1-162"/>
</dbReference>
<dbReference type="PDB" id="4WR6">
    <property type="method" value="X-ray"/>
    <property type="resolution" value="3.05 A"/>
    <property type="chains" value="42/4E=1-162"/>
</dbReference>
<dbReference type="PDB" id="4WRA">
    <property type="method" value="X-ray"/>
    <property type="resolution" value="3.05 A"/>
    <property type="chains" value="42/4E=1-162"/>
</dbReference>
<dbReference type="PDB" id="4WRO">
    <property type="method" value="X-ray"/>
    <property type="resolution" value="3.05 A"/>
    <property type="chains" value="4E=1-162"/>
</dbReference>
<dbReference type="PDB" id="4WSD">
    <property type="method" value="X-ray"/>
    <property type="resolution" value="2.95 A"/>
    <property type="chains" value="42/4E=1-162"/>
</dbReference>
<dbReference type="PDB" id="4WSM">
    <property type="method" value="X-ray"/>
    <property type="resolution" value="3.30 A"/>
    <property type="chains" value="42/4E=1-162"/>
</dbReference>
<dbReference type="PDB" id="4WT1">
    <property type="method" value="X-ray"/>
    <property type="resolution" value="3.05 A"/>
    <property type="chains" value="42/4E=1-162"/>
</dbReference>
<dbReference type="PDB" id="4WT8">
    <property type="method" value="X-ray"/>
    <property type="resolution" value="3.40 A"/>
    <property type="chains" value="AE/BE=5-154"/>
</dbReference>
<dbReference type="PDB" id="4WU1">
    <property type="method" value="X-ray"/>
    <property type="resolution" value="3.20 A"/>
    <property type="chains" value="42/4E=1-162"/>
</dbReference>
<dbReference type="PDB" id="4WZD">
    <property type="method" value="X-ray"/>
    <property type="resolution" value="3.10 A"/>
    <property type="chains" value="42/4E=1-162"/>
</dbReference>
<dbReference type="PDB" id="4WZO">
    <property type="method" value="X-ray"/>
    <property type="resolution" value="3.30 A"/>
    <property type="chains" value="42/4E=1-162"/>
</dbReference>
<dbReference type="PDB" id="4X62">
    <property type="method" value="X-ray"/>
    <property type="resolution" value="3.45 A"/>
    <property type="chains" value="E=5-155"/>
</dbReference>
<dbReference type="PDB" id="4X64">
    <property type="method" value="X-ray"/>
    <property type="resolution" value="3.35 A"/>
    <property type="chains" value="E=5-155"/>
</dbReference>
<dbReference type="PDB" id="4X65">
    <property type="method" value="X-ray"/>
    <property type="resolution" value="3.35 A"/>
    <property type="chains" value="E=5-155"/>
</dbReference>
<dbReference type="PDB" id="4X66">
    <property type="method" value="X-ray"/>
    <property type="resolution" value="3.45 A"/>
    <property type="chains" value="E=5-155"/>
</dbReference>
<dbReference type="PDB" id="4Y4O">
    <property type="method" value="X-ray"/>
    <property type="resolution" value="2.30 A"/>
    <property type="chains" value="1e/2e=1-162"/>
</dbReference>
<dbReference type="PDB" id="4Y4P">
    <property type="method" value="X-ray"/>
    <property type="resolution" value="2.50 A"/>
    <property type="chains" value="1e/2e=1-162"/>
</dbReference>
<dbReference type="PDB" id="4YHH">
    <property type="method" value="X-ray"/>
    <property type="resolution" value="3.42 A"/>
    <property type="chains" value="E=5-161"/>
</dbReference>
<dbReference type="PDB" id="4YPB">
    <property type="method" value="X-ray"/>
    <property type="resolution" value="3.40 A"/>
    <property type="chains" value="QE/XE=1-162"/>
</dbReference>
<dbReference type="PDB" id="4YY3">
    <property type="method" value="X-ray"/>
    <property type="resolution" value="3.60 A"/>
    <property type="chains" value="E=1-162"/>
</dbReference>
<dbReference type="PDB" id="4YZV">
    <property type="method" value="X-ray"/>
    <property type="resolution" value="3.10 A"/>
    <property type="chains" value="QE/XE=1-162"/>
</dbReference>
<dbReference type="PDB" id="4Z3S">
    <property type="method" value="X-ray"/>
    <property type="resolution" value="2.65 A"/>
    <property type="chains" value="1e/2e=1-162"/>
</dbReference>
<dbReference type="PDB" id="4Z8C">
    <property type="method" value="X-ray"/>
    <property type="resolution" value="2.90 A"/>
    <property type="chains" value="1e/2e=1-162"/>
</dbReference>
<dbReference type="PDB" id="4ZER">
    <property type="method" value="X-ray"/>
    <property type="resolution" value="3.10 A"/>
    <property type="chains" value="1e/2e=5-152"/>
</dbReference>
<dbReference type="PDB" id="4ZSN">
    <property type="method" value="X-ray"/>
    <property type="resolution" value="3.60 A"/>
    <property type="chains" value="QE/XE=1-162"/>
</dbReference>
<dbReference type="PDB" id="5A9Z">
    <property type="method" value="EM"/>
    <property type="resolution" value="4.70 A"/>
    <property type="chains" value="BI=5-154"/>
</dbReference>
<dbReference type="PDB" id="5AA0">
    <property type="method" value="EM"/>
    <property type="resolution" value="5.00 A"/>
    <property type="chains" value="BI=5-154"/>
</dbReference>
<dbReference type="PDB" id="5BR8">
    <property type="method" value="X-ray"/>
    <property type="resolution" value="3.40 A"/>
    <property type="chains" value="E=1-162"/>
</dbReference>
<dbReference type="PDB" id="5CZP">
    <property type="method" value="X-ray"/>
    <property type="resolution" value="3.30 A"/>
    <property type="chains" value="QE/XE=1-162"/>
</dbReference>
<dbReference type="PDB" id="5D8B">
    <property type="method" value="X-ray"/>
    <property type="resolution" value="3.63 A"/>
    <property type="chains" value="BC/FA=1-162"/>
</dbReference>
<dbReference type="PDB" id="5DFE">
    <property type="method" value="X-ray"/>
    <property type="resolution" value="3.10 A"/>
    <property type="chains" value="QE/XE=1-162"/>
</dbReference>
<dbReference type="PDB" id="5DOX">
    <property type="method" value="X-ray"/>
    <property type="resolution" value="3.10 A"/>
    <property type="chains" value="1e/2e=1-162"/>
</dbReference>
<dbReference type="PDB" id="5DOY">
    <property type="method" value="X-ray"/>
    <property type="resolution" value="2.60 A"/>
    <property type="chains" value="1e/2e=1-162"/>
</dbReference>
<dbReference type="PDB" id="5E7K">
    <property type="method" value="X-ray"/>
    <property type="resolution" value="3.20 A"/>
    <property type="chains" value="42/4E=1-162"/>
</dbReference>
<dbReference type="PDB" id="5E81">
    <property type="method" value="X-ray"/>
    <property type="resolution" value="2.95 A"/>
    <property type="chains" value="42/4E=1-162"/>
</dbReference>
<dbReference type="PDB" id="5EL4">
    <property type="method" value="X-ray"/>
    <property type="resolution" value="3.15 A"/>
    <property type="chains" value="42/4E=1-162"/>
</dbReference>
<dbReference type="PDB" id="5EL5">
    <property type="method" value="X-ray"/>
    <property type="resolution" value="3.15 A"/>
    <property type="chains" value="42/4E=1-162"/>
</dbReference>
<dbReference type="PDB" id="5EL6">
    <property type="method" value="X-ray"/>
    <property type="resolution" value="3.10 A"/>
    <property type="chains" value="42/4E=1-162"/>
</dbReference>
<dbReference type="PDB" id="5EL7">
    <property type="method" value="X-ray"/>
    <property type="resolution" value="3.15 A"/>
    <property type="chains" value="42/4E=1-162"/>
</dbReference>
<dbReference type="PDB" id="5F8K">
    <property type="method" value="X-ray"/>
    <property type="resolution" value="2.80 A"/>
    <property type="chains" value="1e/2e=5-152"/>
</dbReference>
<dbReference type="PDB" id="5FDU">
    <property type="method" value="X-ray"/>
    <property type="resolution" value="2.90 A"/>
    <property type="chains" value="1e/2e=5-152"/>
</dbReference>
<dbReference type="PDB" id="5FDV">
    <property type="method" value="X-ray"/>
    <property type="resolution" value="2.80 A"/>
    <property type="chains" value="1e/2e=5-152"/>
</dbReference>
<dbReference type="PDB" id="5HAU">
    <property type="method" value="X-ray"/>
    <property type="resolution" value="3.00 A"/>
    <property type="chains" value="1e/2e=1-162"/>
</dbReference>
<dbReference type="PDB" id="5HCP">
    <property type="method" value="X-ray"/>
    <property type="resolution" value="2.89 A"/>
    <property type="chains" value="1e/2e=1-162"/>
</dbReference>
<dbReference type="PDB" id="5HCQ">
    <property type="method" value="X-ray"/>
    <property type="resolution" value="2.80 A"/>
    <property type="chains" value="1e/2e=1-162"/>
</dbReference>
<dbReference type="PDB" id="5HCR">
    <property type="method" value="X-ray"/>
    <property type="resolution" value="2.80 A"/>
    <property type="chains" value="1e/2e=1-162"/>
</dbReference>
<dbReference type="PDB" id="5HD1">
    <property type="method" value="X-ray"/>
    <property type="resolution" value="2.70 A"/>
    <property type="chains" value="1e/2e=1-162"/>
</dbReference>
<dbReference type="PDB" id="5IB7">
    <property type="method" value="X-ray"/>
    <property type="resolution" value="2.99 A"/>
    <property type="chains" value="42/4E=1-162"/>
</dbReference>
<dbReference type="PDB" id="5IB8">
    <property type="method" value="X-ray"/>
    <property type="resolution" value="3.13 A"/>
    <property type="chains" value="42/4E=1-162"/>
</dbReference>
<dbReference type="PDB" id="5IBB">
    <property type="method" value="X-ray"/>
    <property type="resolution" value="2.96 A"/>
    <property type="chains" value="42/4E=1-162"/>
</dbReference>
<dbReference type="PDB" id="5IMQ">
    <property type="method" value="EM"/>
    <property type="resolution" value="3.80 A"/>
    <property type="chains" value="I=1-162"/>
</dbReference>
<dbReference type="PDB" id="5IMR">
    <property type="method" value="EM"/>
    <property type="chains" value="I=1-162"/>
</dbReference>
<dbReference type="PDB" id="5IWA">
    <property type="method" value="X-ray"/>
    <property type="resolution" value="3.50 A"/>
    <property type="chains" value="E=5-161"/>
</dbReference>
<dbReference type="PDB" id="5J30">
    <property type="method" value="X-ray"/>
    <property type="resolution" value="3.20 A"/>
    <property type="chains" value="QE/XE=1-162"/>
</dbReference>
<dbReference type="PDB" id="5J3C">
    <property type="method" value="X-ray"/>
    <property type="resolution" value="3.04 A"/>
    <property type="chains" value="QE/XE=1-162"/>
</dbReference>
<dbReference type="PDB" id="5J4B">
    <property type="method" value="X-ray"/>
    <property type="resolution" value="2.60 A"/>
    <property type="chains" value="1e/2e=1-162"/>
</dbReference>
<dbReference type="PDB" id="5J4C">
    <property type="method" value="X-ray"/>
    <property type="resolution" value="2.80 A"/>
    <property type="chains" value="1e/2e=1-162"/>
</dbReference>
<dbReference type="PDB" id="5J8B">
    <property type="method" value="X-ray"/>
    <property type="resolution" value="2.60 A"/>
    <property type="chains" value="e=1-162"/>
</dbReference>
<dbReference type="PDB" id="5LMN">
    <property type="method" value="EM"/>
    <property type="resolution" value="3.55 A"/>
    <property type="chains" value="E=1-162"/>
</dbReference>
<dbReference type="PDB" id="5LMO">
    <property type="method" value="EM"/>
    <property type="resolution" value="4.30 A"/>
    <property type="chains" value="E=1-162"/>
</dbReference>
<dbReference type="PDB" id="5LMP">
    <property type="method" value="EM"/>
    <property type="resolution" value="5.35 A"/>
    <property type="chains" value="E=1-162"/>
</dbReference>
<dbReference type="PDB" id="5LMQ">
    <property type="method" value="EM"/>
    <property type="resolution" value="4.20 A"/>
    <property type="chains" value="E=1-162"/>
</dbReference>
<dbReference type="PDB" id="5LMR">
    <property type="method" value="EM"/>
    <property type="resolution" value="4.45 A"/>
    <property type="chains" value="E=1-162"/>
</dbReference>
<dbReference type="PDB" id="5LMS">
    <property type="method" value="EM"/>
    <property type="resolution" value="5.10 A"/>
    <property type="chains" value="E=1-162"/>
</dbReference>
<dbReference type="PDB" id="5LMT">
    <property type="method" value="EM"/>
    <property type="resolution" value="4.15 A"/>
    <property type="chains" value="E=1-162"/>
</dbReference>
<dbReference type="PDB" id="5LMU">
    <property type="method" value="EM"/>
    <property type="resolution" value="4.00 A"/>
    <property type="chains" value="E=1-162"/>
</dbReference>
<dbReference type="PDB" id="5LMV">
    <property type="method" value="EM"/>
    <property type="resolution" value="4.90 A"/>
    <property type="chains" value="E=1-162"/>
</dbReference>
<dbReference type="PDB" id="5NDJ">
    <property type="method" value="X-ray"/>
    <property type="resolution" value="3.15 A"/>
    <property type="chains" value="42/4E=1-162"/>
</dbReference>
<dbReference type="PDB" id="5NDK">
    <property type="method" value="X-ray"/>
    <property type="resolution" value="2.95 A"/>
    <property type="chains" value="42/4E=1-162"/>
</dbReference>
<dbReference type="PDB" id="5OT7">
    <property type="method" value="EM"/>
    <property type="resolution" value="3.80 A"/>
    <property type="chains" value="D=5-155"/>
</dbReference>
<dbReference type="PDB" id="5UQ7">
    <property type="method" value="EM"/>
    <property type="resolution" value="3.50 A"/>
    <property type="chains" value="e=5-152"/>
</dbReference>
<dbReference type="PDB" id="5UQ8">
    <property type="method" value="EM"/>
    <property type="resolution" value="3.20 A"/>
    <property type="chains" value="e=5-152"/>
</dbReference>
<dbReference type="PDB" id="5VP2">
    <property type="method" value="X-ray"/>
    <property type="resolution" value="2.80 A"/>
    <property type="chains" value="1e/2e=1-162"/>
</dbReference>
<dbReference type="PDB" id="5VPO">
    <property type="method" value="X-ray"/>
    <property type="resolution" value="3.34 A"/>
    <property type="chains" value="QE/XE=1-162"/>
</dbReference>
<dbReference type="PDB" id="5VPP">
    <property type="method" value="X-ray"/>
    <property type="resolution" value="3.90 A"/>
    <property type="chains" value="QE/XE=1-162"/>
</dbReference>
<dbReference type="PDB" id="5W4K">
    <property type="method" value="X-ray"/>
    <property type="resolution" value="2.70 A"/>
    <property type="chains" value="1e/2e=1-162"/>
</dbReference>
<dbReference type="PDB" id="5WIS">
    <property type="method" value="X-ray"/>
    <property type="resolution" value="2.70 A"/>
    <property type="chains" value="1e/2e=1-162"/>
</dbReference>
<dbReference type="PDB" id="5WIT">
    <property type="method" value="X-ray"/>
    <property type="resolution" value="2.60 A"/>
    <property type="chains" value="1e/2e=1-162"/>
</dbReference>
<dbReference type="PDB" id="5WNP">
    <property type="method" value="X-ray"/>
    <property type="resolution" value="3.30 A"/>
    <property type="chains" value="E=5-155"/>
</dbReference>
<dbReference type="PDB" id="5WNQ">
    <property type="method" value="X-ray"/>
    <property type="resolution" value="3.50 A"/>
    <property type="chains" value="E=5-154"/>
</dbReference>
<dbReference type="PDB" id="5WNR">
    <property type="method" value="X-ray"/>
    <property type="resolution" value="3.50 A"/>
    <property type="chains" value="E=5-154"/>
</dbReference>
<dbReference type="PDB" id="5WNS">
    <property type="method" value="X-ray"/>
    <property type="resolution" value="3.50 A"/>
    <property type="chains" value="E=5-154"/>
</dbReference>
<dbReference type="PDB" id="5WNT">
    <property type="method" value="X-ray"/>
    <property type="resolution" value="3.30 A"/>
    <property type="chains" value="E=5-155"/>
</dbReference>
<dbReference type="PDB" id="5WNU">
    <property type="method" value="X-ray"/>
    <property type="resolution" value="3.40 A"/>
    <property type="chains" value="E=5-155"/>
</dbReference>
<dbReference type="PDB" id="5WNV">
    <property type="method" value="X-ray"/>
    <property type="resolution" value="3.30 A"/>
    <property type="chains" value="E=5-155"/>
</dbReference>
<dbReference type="PDB" id="5ZLU">
    <property type="method" value="EM"/>
    <property type="resolution" value="3.60 A"/>
    <property type="chains" value="K=1-162"/>
</dbReference>
<dbReference type="PDB" id="6BUW">
    <property type="method" value="X-ray"/>
    <property type="resolution" value="3.50 A"/>
    <property type="chains" value="QE/XE=1-162"/>
</dbReference>
<dbReference type="PDB" id="6BZ6">
    <property type="method" value="X-ray"/>
    <property type="resolution" value="3.18 A"/>
    <property type="chains" value="QE/XE=1-162"/>
</dbReference>
<dbReference type="PDB" id="6BZ7">
    <property type="method" value="X-ray"/>
    <property type="resolution" value="3.68 A"/>
    <property type="chains" value="QE/XE=1-162"/>
</dbReference>
<dbReference type="PDB" id="6BZ8">
    <property type="method" value="X-ray"/>
    <property type="resolution" value="3.74 A"/>
    <property type="chains" value="QE/XE=1-162"/>
</dbReference>
<dbReference type="PDB" id="6C5L">
    <property type="method" value="X-ray"/>
    <property type="resolution" value="3.20 A"/>
    <property type="chains" value="AE/CE=1-162"/>
</dbReference>
<dbReference type="PDB" id="6CAE">
    <property type="method" value="X-ray"/>
    <property type="resolution" value="2.60 A"/>
    <property type="chains" value="1e/2e=1-162"/>
</dbReference>
<dbReference type="PDB" id="6CAO">
    <property type="method" value="X-ray"/>
    <property type="resolution" value="3.45 A"/>
    <property type="chains" value="E=5-155"/>
</dbReference>
<dbReference type="PDB" id="6CAP">
    <property type="method" value="X-ray"/>
    <property type="resolution" value="3.40 A"/>
    <property type="chains" value="E=5-154"/>
</dbReference>
<dbReference type="PDB" id="6CAQ">
    <property type="method" value="X-ray"/>
    <property type="resolution" value="3.40 A"/>
    <property type="chains" value="E=5-154"/>
</dbReference>
<dbReference type="PDB" id="6CAR">
    <property type="method" value="X-ray"/>
    <property type="resolution" value="3.40 A"/>
    <property type="chains" value="E=2-162"/>
</dbReference>
<dbReference type="PDB" id="6CAS">
    <property type="method" value="X-ray"/>
    <property type="resolution" value="3.50 A"/>
    <property type="chains" value="E=2-162"/>
</dbReference>
<dbReference type="PDB" id="6CFJ">
    <property type="method" value="X-ray"/>
    <property type="resolution" value="2.80 A"/>
    <property type="chains" value="1e/2e=1-162"/>
</dbReference>
<dbReference type="PDB" id="6CFK">
    <property type="method" value="X-ray"/>
    <property type="resolution" value="2.70 A"/>
    <property type="chains" value="1e/2e=1-162"/>
</dbReference>
<dbReference type="PDB" id="6CFL">
    <property type="method" value="X-ray"/>
    <property type="resolution" value="2.60 A"/>
    <property type="chains" value="1e/2e=1-162"/>
</dbReference>
<dbReference type="PDB" id="6CZR">
    <property type="method" value="X-ray"/>
    <property type="resolution" value="3.14 A"/>
    <property type="chains" value="1e/2e=5-152"/>
</dbReference>
<dbReference type="PDB" id="6DTI">
    <property type="method" value="X-ray"/>
    <property type="resolution" value="3.54 A"/>
    <property type="chains" value="E=1-162"/>
</dbReference>
<dbReference type="PDB" id="6FKR">
    <property type="method" value="X-ray"/>
    <property type="resolution" value="3.20 A"/>
    <property type="chains" value="1e/2e=5-152"/>
</dbReference>
<dbReference type="PDB" id="6GSJ">
    <property type="method" value="X-ray"/>
    <property type="resolution" value="2.96 A"/>
    <property type="chains" value="42/4E=1-162"/>
</dbReference>
<dbReference type="PDB" id="6GSK">
    <property type="method" value="X-ray"/>
    <property type="resolution" value="3.36 A"/>
    <property type="chains" value="42/4E=1-162"/>
</dbReference>
<dbReference type="PDB" id="6GSL">
    <property type="method" value="X-ray"/>
    <property type="resolution" value="3.16 A"/>
    <property type="chains" value="42/4E=1-162"/>
</dbReference>
<dbReference type="PDB" id="6GZQ">
    <property type="method" value="EM"/>
    <property type="resolution" value="3.28 A"/>
    <property type="chains" value="E2=5-155"/>
</dbReference>
<dbReference type="PDB" id="6GZX">
    <property type="method" value="EM"/>
    <property type="resolution" value="4.57 A"/>
    <property type="chains" value="E3/E4=5-155"/>
</dbReference>
<dbReference type="PDB" id="6GZZ">
    <property type="method" value="EM"/>
    <property type="resolution" value="4.13 A"/>
    <property type="chains" value="E3/E4=5-155"/>
</dbReference>
<dbReference type="PDB" id="6MKN">
    <property type="method" value="X-ray"/>
    <property type="resolution" value="3.46 A"/>
    <property type="chains" value="E=1-162"/>
</dbReference>
<dbReference type="PDB" id="6MPF">
    <property type="method" value="X-ray"/>
    <property type="resolution" value="3.33 A"/>
    <property type="chains" value="E=5-154"/>
</dbReference>
<dbReference type="PDB" id="6MPI">
    <property type="method" value="X-ray"/>
    <property type="resolution" value="3.33 A"/>
    <property type="chains" value="E=1-162"/>
</dbReference>
<dbReference type="PDB" id="6N9E">
    <property type="method" value="X-ray"/>
    <property type="resolution" value="3.70 A"/>
    <property type="chains" value="1e/2e=1-162"/>
</dbReference>
<dbReference type="PDB" id="6N9F">
    <property type="method" value="X-ray"/>
    <property type="resolution" value="3.70 A"/>
    <property type="chains" value="1e/2e=1-162"/>
</dbReference>
<dbReference type="PDB" id="6ND5">
    <property type="method" value="X-ray"/>
    <property type="resolution" value="2.60 A"/>
    <property type="chains" value="1e/2e=1-162"/>
</dbReference>
<dbReference type="PDB" id="6ND6">
    <property type="method" value="X-ray"/>
    <property type="resolution" value="2.85 A"/>
    <property type="chains" value="1e/2e=1-162"/>
</dbReference>
<dbReference type="PDB" id="6NDK">
    <property type="method" value="X-ray"/>
    <property type="resolution" value="3.64 A"/>
    <property type="chains" value="QE/XE=1-162"/>
</dbReference>
<dbReference type="PDB" id="6NSH">
    <property type="method" value="X-ray"/>
    <property type="resolution" value="3.40 A"/>
    <property type="chains" value="QE/XE=1-162"/>
</dbReference>
<dbReference type="PDB" id="6NTA">
    <property type="method" value="X-ray"/>
    <property type="resolution" value="3.10 A"/>
    <property type="chains" value="QE/XE=1-162"/>
</dbReference>
<dbReference type="PDB" id="6NUO">
    <property type="method" value="X-ray"/>
    <property type="resolution" value="3.20 A"/>
    <property type="chains" value="QE/XE=1-162"/>
</dbReference>
<dbReference type="PDB" id="6NWY">
    <property type="method" value="X-ray"/>
    <property type="resolution" value="3.50 A"/>
    <property type="chains" value="QE/XE=1-162"/>
</dbReference>
<dbReference type="PDB" id="6NY6">
    <property type="method" value="X-ray"/>
    <property type="resolution" value="3.74 A"/>
    <property type="chains" value="E=1-162"/>
</dbReference>
<dbReference type="PDB" id="6O3M">
    <property type="method" value="X-ray"/>
    <property type="resolution" value="3.97 A"/>
    <property type="chains" value="QE/XE=1-162"/>
</dbReference>
<dbReference type="PDB" id="6O97">
    <property type="method" value="X-ray"/>
    <property type="resolution" value="2.75 A"/>
    <property type="chains" value="1e/2e=1-162"/>
</dbReference>
<dbReference type="PDB" id="6OF1">
    <property type="method" value="X-ray"/>
    <property type="resolution" value="2.80 A"/>
    <property type="chains" value="1e/2e=1-162"/>
</dbReference>
<dbReference type="PDB" id="6OF6">
    <property type="method" value="X-ray"/>
    <property type="resolution" value="3.20 A"/>
    <property type="chains" value="QE/XE=1-162"/>
</dbReference>
<dbReference type="PDB" id="6OJ2">
    <property type="method" value="X-ray"/>
    <property type="resolution" value="3.20 A"/>
    <property type="chains" value="QE/XE=1-162"/>
</dbReference>
<dbReference type="PDB" id="6OPE">
    <property type="method" value="X-ray"/>
    <property type="resolution" value="3.10 A"/>
    <property type="chains" value="QE/XE=1-162"/>
</dbReference>
<dbReference type="PDB" id="6ORD">
    <property type="method" value="X-ray"/>
    <property type="resolution" value="3.10 A"/>
    <property type="chains" value="QE/XE=1-162"/>
</dbReference>
<dbReference type="PDB" id="6OSI">
    <property type="method" value="X-ray"/>
    <property type="resolution" value="4.14 A"/>
    <property type="chains" value="QE/XE=1-162"/>
</dbReference>
<dbReference type="PDB" id="6OTR">
    <property type="method" value="X-ray"/>
    <property type="resolution" value="3.12 A"/>
    <property type="chains" value="QE/XE=1-162"/>
</dbReference>
<dbReference type="PDB" id="6OXA">
    <property type="method" value="X-ray"/>
    <property type="resolution" value="3.25 A"/>
    <property type="chains" value="QE/XE=1-162"/>
</dbReference>
<dbReference type="PDB" id="6OXI">
    <property type="method" value="X-ray"/>
    <property type="resolution" value="3.50 A"/>
    <property type="chains" value="QE/XE=1-162"/>
</dbReference>
<dbReference type="PDB" id="6Q95">
    <property type="method" value="EM"/>
    <property type="resolution" value="3.70 A"/>
    <property type="chains" value="j=5-155"/>
</dbReference>
<dbReference type="PDB" id="6QNQ">
    <property type="method" value="X-ray"/>
    <property type="resolution" value="3.50 A"/>
    <property type="chains" value="42/4E=1-162"/>
</dbReference>
<dbReference type="PDB" id="6QNR">
    <property type="method" value="X-ray"/>
    <property type="resolution" value="3.10 A"/>
    <property type="chains" value="42/4E=1-162"/>
</dbReference>
<dbReference type="PDB" id="6UCQ">
    <property type="method" value="X-ray"/>
    <property type="resolution" value="3.50 A"/>
    <property type="chains" value="1e/2e=1-162"/>
</dbReference>
<dbReference type="PDB" id="6UO1">
    <property type="method" value="X-ray"/>
    <property type="resolution" value="2.95 A"/>
    <property type="chains" value="1e/2e=1-162"/>
</dbReference>
<dbReference type="PDB" id="6XHV">
    <property type="method" value="X-ray"/>
    <property type="resolution" value="2.40 A"/>
    <property type="chains" value="1e/2e=1-162"/>
</dbReference>
<dbReference type="PDB" id="6XHW">
    <property type="method" value="X-ray"/>
    <property type="resolution" value="2.50 A"/>
    <property type="chains" value="1e/2e=1-162"/>
</dbReference>
<dbReference type="PDB" id="6XHX">
    <property type="method" value="X-ray"/>
    <property type="resolution" value="2.55 A"/>
    <property type="chains" value="1e/2e=1-162"/>
</dbReference>
<dbReference type="PDB" id="6XHY">
    <property type="method" value="X-ray"/>
    <property type="resolution" value="2.60 A"/>
    <property type="chains" value="1e/2e=1-162"/>
</dbReference>
<dbReference type="PDB" id="6XQD">
    <property type="method" value="X-ray"/>
    <property type="resolution" value="2.80 A"/>
    <property type="chains" value="1e/2e=1-162"/>
</dbReference>
<dbReference type="PDB" id="6XQE">
    <property type="method" value="X-ray"/>
    <property type="resolution" value="3.00 A"/>
    <property type="chains" value="1e/2e=1-162"/>
</dbReference>
<dbReference type="PDB" id="7AZO">
    <property type="method" value="X-ray"/>
    <property type="resolution" value="3.30 A"/>
    <property type="chains" value="S5A/S5B=1-162"/>
</dbReference>
<dbReference type="PDB" id="7AZS">
    <property type="method" value="X-ray"/>
    <property type="resolution" value="3.10 A"/>
    <property type="chains" value="S5A/S5B=1-162"/>
</dbReference>
<dbReference type="PDB" id="7DUG">
    <property type="method" value="X-ray"/>
    <property type="resolution" value="3.75 A"/>
    <property type="chains" value="E=1-162"/>
</dbReference>
<dbReference type="PDB" id="7DUH">
    <property type="method" value="X-ray"/>
    <property type="resolution" value="3.75 A"/>
    <property type="chains" value="E=1-162"/>
</dbReference>
<dbReference type="PDB" id="7DUI">
    <property type="method" value="X-ray"/>
    <property type="resolution" value="3.62 A"/>
    <property type="chains" value="E=1-162"/>
</dbReference>
<dbReference type="PDB" id="7DUJ">
    <property type="method" value="X-ray"/>
    <property type="resolution" value="3.75 A"/>
    <property type="chains" value="E=1-162"/>
</dbReference>
<dbReference type="PDB" id="7DUK">
    <property type="method" value="X-ray"/>
    <property type="resolution" value="3.60 A"/>
    <property type="chains" value="E=1-162"/>
</dbReference>
<dbReference type="PDB" id="7DUL">
    <property type="method" value="X-ray"/>
    <property type="resolution" value="3.62 A"/>
    <property type="chains" value="E=1-162"/>
</dbReference>
<dbReference type="PDB" id="7JQL">
    <property type="method" value="X-ray"/>
    <property type="resolution" value="3.00 A"/>
    <property type="chains" value="1e/2e=1-162"/>
</dbReference>
<dbReference type="PDB" id="7JQM">
    <property type="method" value="X-ray"/>
    <property type="resolution" value="3.05 A"/>
    <property type="chains" value="1e/2e=1-162"/>
</dbReference>
<dbReference type="PDB" id="7LH5">
    <property type="method" value="X-ray"/>
    <property type="resolution" value="3.27 A"/>
    <property type="chains" value="AE/CE=1-162"/>
</dbReference>
<dbReference type="PDB" id="7MD7">
    <property type="method" value="X-ray"/>
    <property type="resolution" value="2.80 A"/>
    <property type="chains" value="1e/2e=1-162"/>
</dbReference>
<dbReference type="PDB" id="7RQ8">
    <property type="method" value="X-ray"/>
    <property type="resolution" value="2.50 A"/>
    <property type="chains" value="1e/2e=1-162"/>
</dbReference>
<dbReference type="PDB" id="7RQ9">
    <property type="method" value="X-ray"/>
    <property type="resolution" value="2.60 A"/>
    <property type="chains" value="1e/2e=1-162"/>
</dbReference>
<dbReference type="PDB" id="7RQA">
    <property type="method" value="X-ray"/>
    <property type="resolution" value="2.40 A"/>
    <property type="chains" value="1e/2e=1-162"/>
</dbReference>
<dbReference type="PDB" id="7RQB">
    <property type="method" value="X-ray"/>
    <property type="resolution" value="2.45 A"/>
    <property type="chains" value="1e/2e=1-162"/>
</dbReference>
<dbReference type="PDB" id="7RQC">
    <property type="method" value="X-ray"/>
    <property type="resolution" value="2.50 A"/>
    <property type="chains" value="1e/2e=1-162"/>
</dbReference>
<dbReference type="PDB" id="7RQD">
    <property type="method" value="X-ray"/>
    <property type="resolution" value="2.50 A"/>
    <property type="chains" value="1e/2e=1-162"/>
</dbReference>
<dbReference type="PDB" id="7RQE">
    <property type="method" value="X-ray"/>
    <property type="resolution" value="2.40 A"/>
    <property type="chains" value="1e/2e=1-162"/>
</dbReference>
<dbReference type="PDB" id="7U2H">
    <property type="method" value="X-ray"/>
    <property type="resolution" value="2.55 A"/>
    <property type="chains" value="1e/2e=1-162"/>
</dbReference>
<dbReference type="PDB" id="7U2I">
    <property type="method" value="X-ray"/>
    <property type="resolution" value="2.55 A"/>
    <property type="chains" value="1e/2e=1-162"/>
</dbReference>
<dbReference type="PDB" id="7U2J">
    <property type="method" value="X-ray"/>
    <property type="resolution" value="2.55 A"/>
    <property type="chains" value="1e/2e=1-162"/>
</dbReference>
<dbReference type="PDB" id="7V2L">
    <property type="method" value="EM"/>
    <property type="resolution" value="3.30 A"/>
    <property type="chains" value="E=1-162"/>
</dbReference>
<dbReference type="PDB" id="7V2M">
    <property type="method" value="EM"/>
    <property type="resolution" value="3.40 A"/>
    <property type="chains" value="E=1-162"/>
</dbReference>
<dbReference type="PDB" id="7V2N">
    <property type="method" value="EM"/>
    <property type="resolution" value="3.60 A"/>
    <property type="chains" value="E=1-162"/>
</dbReference>
<dbReference type="PDB" id="7V2O">
    <property type="method" value="EM"/>
    <property type="resolution" value="3.50 A"/>
    <property type="chains" value="E=1-162"/>
</dbReference>
<dbReference type="PDB" id="7V2P">
    <property type="method" value="EM"/>
    <property type="resolution" value="3.30 A"/>
    <property type="chains" value="E=1-162"/>
</dbReference>
<dbReference type="PDB" id="7V2Q">
    <property type="method" value="EM"/>
    <property type="resolution" value="3.24 A"/>
    <property type="chains" value="E=1-162"/>
</dbReference>
<dbReference type="PDB" id="8CVJ">
    <property type="method" value="X-ray"/>
    <property type="resolution" value="2.40 A"/>
    <property type="chains" value="1e/2e=1-162"/>
</dbReference>
<dbReference type="PDB" id="8CVK">
    <property type="method" value="X-ray"/>
    <property type="resolution" value="2.50 A"/>
    <property type="chains" value="1e/2e=1-162"/>
</dbReference>
<dbReference type="PDB" id="8CVL">
    <property type="method" value="X-ray"/>
    <property type="resolution" value="2.30 A"/>
    <property type="chains" value="1e/2e=1-162"/>
</dbReference>
<dbReference type="PDB" id="8EKB">
    <property type="method" value="X-ray"/>
    <property type="resolution" value="2.70 A"/>
    <property type="chains" value="1e/2e=1-162"/>
</dbReference>
<dbReference type="PDB" id="8EV6">
    <property type="method" value="X-ray"/>
    <property type="resolution" value="2.95 A"/>
    <property type="chains" value="1e/2e=1-162"/>
</dbReference>
<dbReference type="PDB" id="8EV7">
    <property type="method" value="X-ray"/>
    <property type="resolution" value="2.89 A"/>
    <property type="chains" value="1e/2e=1-162"/>
</dbReference>
<dbReference type="PDB" id="8FC1">
    <property type="method" value="X-ray"/>
    <property type="resolution" value="2.50 A"/>
    <property type="chains" value="1e/2e=1-162"/>
</dbReference>
<dbReference type="PDB" id="8FC2">
    <property type="method" value="X-ray"/>
    <property type="resolution" value="2.50 A"/>
    <property type="chains" value="1e/2e=1-162"/>
</dbReference>
<dbReference type="PDB" id="8FC3">
    <property type="method" value="X-ray"/>
    <property type="resolution" value="2.60 A"/>
    <property type="chains" value="1e/2e=1-162"/>
</dbReference>
<dbReference type="PDB" id="8FC4">
    <property type="method" value="X-ray"/>
    <property type="resolution" value="2.45 A"/>
    <property type="chains" value="1e/2e=1-162"/>
</dbReference>
<dbReference type="PDB" id="8FC5">
    <property type="method" value="X-ray"/>
    <property type="resolution" value="2.65 A"/>
    <property type="chains" value="1e/2e=1-162"/>
</dbReference>
<dbReference type="PDB" id="8FC6">
    <property type="method" value="X-ray"/>
    <property type="resolution" value="2.35 A"/>
    <property type="chains" value="1e/2e=1-162"/>
</dbReference>
<dbReference type="PDB" id="8FOM">
    <property type="method" value="X-ray"/>
    <property type="resolution" value="3.58 A"/>
    <property type="chains" value="QE/XE=1-162"/>
</dbReference>
<dbReference type="PDB" id="8FON">
    <property type="method" value="X-ray"/>
    <property type="resolution" value="3.64 A"/>
    <property type="chains" value="QE/XE=1-162"/>
</dbReference>
<dbReference type="PDB" id="8G29">
    <property type="method" value="X-ray"/>
    <property type="resolution" value="2.55 A"/>
    <property type="chains" value="1e/2e=1-162"/>
</dbReference>
<dbReference type="PDB" id="8G2A">
    <property type="method" value="X-ray"/>
    <property type="resolution" value="2.45 A"/>
    <property type="chains" value="1e/2e=1-162"/>
</dbReference>
<dbReference type="PDB" id="8G2B">
    <property type="method" value="X-ray"/>
    <property type="resolution" value="2.55 A"/>
    <property type="chains" value="1e/2e=1-162"/>
</dbReference>
<dbReference type="PDB" id="8G2C">
    <property type="method" value="X-ray"/>
    <property type="resolution" value="2.65 A"/>
    <property type="chains" value="1e/2e=1-162"/>
</dbReference>
<dbReference type="PDB" id="8G2D">
    <property type="method" value="X-ray"/>
    <property type="resolution" value="2.70 A"/>
    <property type="chains" value="1e/2e=1-162"/>
</dbReference>
<dbReference type="PDB" id="8T8B">
    <property type="method" value="X-ray"/>
    <property type="resolution" value="2.65 A"/>
    <property type="chains" value="1e/2e=1-162"/>
</dbReference>
<dbReference type="PDB" id="8T8C">
    <property type="method" value="X-ray"/>
    <property type="resolution" value="2.60 A"/>
    <property type="chains" value="1e/2e=1-162"/>
</dbReference>
<dbReference type="PDB" id="8UD6">
    <property type="method" value="X-ray"/>
    <property type="resolution" value="2.70 A"/>
    <property type="chains" value="1e/2e=1-162"/>
</dbReference>
<dbReference type="PDB" id="8UD7">
    <property type="method" value="X-ray"/>
    <property type="resolution" value="2.55 A"/>
    <property type="chains" value="1e/2e=1-162"/>
</dbReference>
<dbReference type="PDB" id="8UD8">
    <property type="method" value="X-ray"/>
    <property type="resolution" value="2.60 A"/>
    <property type="chains" value="1e/2e=1-162"/>
</dbReference>
<dbReference type="PDB" id="8UVR">
    <property type="method" value="X-ray"/>
    <property type="resolution" value="2.60 A"/>
    <property type="chains" value="1e/2e=1-162"/>
</dbReference>
<dbReference type="PDB" id="8UVS">
    <property type="method" value="X-ray"/>
    <property type="resolution" value="2.75 A"/>
    <property type="chains" value="1e/2e=1-162"/>
</dbReference>
<dbReference type="PDB" id="8VTU">
    <property type="method" value="X-ray"/>
    <property type="resolution" value="2.40 A"/>
    <property type="chains" value="1e/2e=1-162"/>
</dbReference>
<dbReference type="PDB" id="8VTV">
    <property type="method" value="X-ray"/>
    <property type="resolution" value="2.55 A"/>
    <property type="chains" value="1e/2e=1-162"/>
</dbReference>
<dbReference type="PDB" id="8VTW">
    <property type="method" value="X-ray"/>
    <property type="resolution" value="2.35 A"/>
    <property type="chains" value="1e/2e=1-162"/>
</dbReference>
<dbReference type="PDB" id="8VTX">
    <property type="method" value="X-ray"/>
    <property type="resolution" value="2.40 A"/>
    <property type="chains" value="1e/2e=1-162"/>
</dbReference>
<dbReference type="PDB" id="8VTY">
    <property type="method" value="X-ray"/>
    <property type="resolution" value="2.60 A"/>
    <property type="chains" value="1e/2e=1-162"/>
</dbReference>
<dbReference type="PDB" id="9B00">
    <property type="method" value="X-ray"/>
    <property type="resolution" value="2.80 A"/>
    <property type="chains" value="1e/2e=1-162"/>
</dbReference>
<dbReference type="PDB" id="9D0J">
    <property type="method" value="X-ray"/>
    <property type="resolution" value="2.50 A"/>
    <property type="chains" value="1e/2e=1-162"/>
</dbReference>
<dbReference type="PDB" id="9D7R">
    <property type="method" value="X-ray"/>
    <property type="resolution" value="2.70 A"/>
    <property type="chains" value="1e/2e=1-162"/>
</dbReference>
<dbReference type="PDB" id="9D7S">
    <property type="method" value="X-ray"/>
    <property type="resolution" value="2.85 A"/>
    <property type="chains" value="1e/2e=1-162"/>
</dbReference>
<dbReference type="PDB" id="9D7T">
    <property type="method" value="X-ray"/>
    <property type="resolution" value="2.70 A"/>
    <property type="chains" value="1e/2e=1-162"/>
</dbReference>
<dbReference type="PDB" id="9DFC">
    <property type="method" value="X-ray"/>
    <property type="resolution" value="2.50 A"/>
    <property type="chains" value="1e/2e=1-162"/>
</dbReference>
<dbReference type="PDB" id="9DFD">
    <property type="method" value="X-ray"/>
    <property type="resolution" value="2.60 A"/>
    <property type="chains" value="1e/2e=1-162"/>
</dbReference>
<dbReference type="PDB" id="9DFE">
    <property type="method" value="X-ray"/>
    <property type="resolution" value="2.60 A"/>
    <property type="chains" value="1e/2e=1-162"/>
</dbReference>
<dbReference type="PDBsum" id="1FJG"/>
<dbReference type="PDBsum" id="1FKA"/>
<dbReference type="PDBsum" id="1HNW"/>
<dbReference type="PDBsum" id="1HNX"/>
<dbReference type="PDBsum" id="1HNZ"/>
<dbReference type="PDBsum" id="1HR0"/>
<dbReference type="PDBsum" id="1I94"/>
<dbReference type="PDBsum" id="1I95"/>
<dbReference type="PDBsum" id="1I96"/>
<dbReference type="PDBsum" id="1I97"/>
<dbReference type="PDBsum" id="1IBK"/>
<dbReference type="PDBsum" id="1IBL"/>
<dbReference type="PDBsum" id="1IBM"/>
<dbReference type="PDBsum" id="1J5E"/>
<dbReference type="PDBsum" id="1JGO"/>
<dbReference type="PDBsum" id="1JGP"/>
<dbReference type="PDBsum" id="1JGQ"/>
<dbReference type="PDBsum" id="1ML5"/>
<dbReference type="PDBsum" id="1N32"/>
<dbReference type="PDBsum" id="1N33"/>
<dbReference type="PDBsum" id="1N34"/>
<dbReference type="PDBsum" id="1N36"/>
<dbReference type="PDBsum" id="1QD7"/>
<dbReference type="PDBsum" id="1VVJ"/>
<dbReference type="PDBsum" id="1VY4"/>
<dbReference type="PDBsum" id="1VY5"/>
<dbReference type="PDBsum" id="1VY6"/>
<dbReference type="PDBsum" id="1VY7"/>
<dbReference type="PDBsum" id="1XMO"/>
<dbReference type="PDBsum" id="1XMQ"/>
<dbReference type="PDBsum" id="1XNQ"/>
<dbReference type="PDBsum" id="1XNR"/>
<dbReference type="PDBsum" id="2E5L"/>
<dbReference type="PDBsum" id="2F4V"/>
<dbReference type="PDBsum" id="2HHH"/>
<dbReference type="PDBsum" id="2UU9"/>
<dbReference type="PDBsum" id="2UUA"/>
<dbReference type="PDBsum" id="2UUB"/>
<dbReference type="PDBsum" id="2UUC"/>
<dbReference type="PDBsum" id="2UXB"/>
<dbReference type="PDBsum" id="2UXC"/>
<dbReference type="PDBsum" id="2UXD"/>
<dbReference type="PDBsum" id="2VQE"/>
<dbReference type="PDBsum" id="2VQF"/>
<dbReference type="PDBsum" id="2ZM6"/>
<dbReference type="PDBsum" id="3OTO"/>
<dbReference type="PDBsum" id="3T1H"/>
<dbReference type="PDBsum" id="3T1Y"/>
<dbReference type="PDBsum" id="4AQY"/>
<dbReference type="PDBsum" id="4B3M"/>
<dbReference type="PDBsum" id="4B3R"/>
<dbReference type="PDBsum" id="4B3S"/>
<dbReference type="PDBsum" id="4B3T"/>
<dbReference type="PDBsum" id="4DR1"/>
<dbReference type="PDBsum" id="4DR2"/>
<dbReference type="PDBsum" id="4DR3"/>
<dbReference type="PDBsum" id="4DR4"/>
<dbReference type="PDBsum" id="4DR5"/>
<dbReference type="PDBsum" id="4DR6"/>
<dbReference type="PDBsum" id="4DR7"/>
<dbReference type="PDBsum" id="4DUY"/>
<dbReference type="PDBsum" id="4DUZ"/>
<dbReference type="PDBsum" id="4DV0"/>
<dbReference type="PDBsum" id="4DV1"/>
<dbReference type="PDBsum" id="4DV2"/>
<dbReference type="PDBsum" id="4DV3"/>
<dbReference type="PDBsum" id="4DV4"/>
<dbReference type="PDBsum" id="4DV5"/>
<dbReference type="PDBsum" id="4DV6"/>
<dbReference type="PDBsum" id="4DV7"/>
<dbReference type="PDBsum" id="4GKJ"/>
<dbReference type="PDBsum" id="4GKK"/>
<dbReference type="PDBsum" id="4JI0"/>
<dbReference type="PDBsum" id="4JI1"/>
<dbReference type="PDBsum" id="4JI2"/>
<dbReference type="PDBsum" id="4JI3"/>
<dbReference type="PDBsum" id="4JI4"/>
<dbReference type="PDBsum" id="4JI5"/>
<dbReference type="PDBsum" id="4JI6"/>
<dbReference type="PDBsum" id="4JI7"/>
<dbReference type="PDBsum" id="4JI8"/>
<dbReference type="PDBsum" id="4JV5"/>
<dbReference type="PDBsum" id="4JYA"/>
<dbReference type="PDBsum" id="4K0K"/>
<dbReference type="PDBsum" id="4KHP"/>
<dbReference type="PDBsum" id="4L47"/>
<dbReference type="PDBsum" id="4L71"/>
<dbReference type="PDBsum" id="4LEL"/>
<dbReference type="PDBsum" id="4LF4"/>
<dbReference type="PDBsum" id="4LF5"/>
<dbReference type="PDBsum" id="4LF6"/>
<dbReference type="PDBsum" id="4LF7"/>
<dbReference type="PDBsum" id="4LF8"/>
<dbReference type="PDBsum" id="4LF9"/>
<dbReference type="PDBsum" id="4LFA"/>
<dbReference type="PDBsum" id="4LFB"/>
<dbReference type="PDBsum" id="4LFC"/>
<dbReference type="PDBsum" id="4LFZ"/>
<dbReference type="PDBsum" id="4LNT"/>
<dbReference type="PDBsum" id="4LSK"/>
<dbReference type="PDBsum" id="4LT8"/>
<dbReference type="PDBsum" id="4NXM"/>
<dbReference type="PDBsum" id="4NXN"/>
<dbReference type="PDBsum" id="4OX9"/>
<dbReference type="PDBsum" id="4P6F"/>
<dbReference type="PDBsum" id="4P70"/>
<dbReference type="PDBsum" id="4TUA"/>
<dbReference type="PDBsum" id="4TUB"/>
<dbReference type="PDBsum" id="4TUC"/>
<dbReference type="PDBsum" id="4TUD"/>
<dbReference type="PDBsum" id="4TUE"/>
<dbReference type="PDBsum" id="4V42"/>
<dbReference type="PDBsum" id="4V49"/>
<dbReference type="PDBsum" id="4V4A"/>
<dbReference type="PDBsum" id="4V4G"/>
<dbReference type="PDBsum" id="4V4I"/>
<dbReference type="PDBsum" id="4V4P"/>
<dbReference type="PDBsum" id="4V4R"/>
<dbReference type="PDBsum" id="4V4S"/>
<dbReference type="PDBsum" id="4V4T"/>
<dbReference type="PDBsum" id="4V4X"/>
<dbReference type="PDBsum" id="4V4Y"/>
<dbReference type="PDBsum" id="4V4Z"/>
<dbReference type="PDBsum" id="4V51"/>
<dbReference type="PDBsum" id="4V5A"/>
<dbReference type="PDBsum" id="4V5C"/>
<dbReference type="PDBsum" id="4V5D"/>
<dbReference type="PDBsum" id="4V5E"/>
<dbReference type="PDBsum" id="4V5F"/>
<dbReference type="PDBsum" id="4V5G"/>
<dbReference type="PDBsum" id="4V5J"/>
<dbReference type="PDBsum" id="4V5K"/>
<dbReference type="PDBsum" id="4V5L"/>
<dbReference type="PDBsum" id="4V5M"/>
<dbReference type="PDBsum" id="4V5N"/>
<dbReference type="PDBsum" id="4V5P"/>
<dbReference type="PDBsum" id="4V5Q"/>
<dbReference type="PDBsum" id="4V5R"/>
<dbReference type="PDBsum" id="4V5S"/>
<dbReference type="PDBsum" id="4V68"/>
<dbReference type="PDBsum" id="4V6A"/>
<dbReference type="PDBsum" id="4V6F"/>
<dbReference type="PDBsum" id="4V6G"/>
<dbReference type="PDBsum" id="4V7J"/>
<dbReference type="PDBsum" id="4V7K"/>
<dbReference type="PDBsum" id="4V7L"/>
<dbReference type="PDBsum" id="4V7M"/>
<dbReference type="PDBsum" id="4V7W"/>
<dbReference type="PDBsum" id="4V7X"/>
<dbReference type="PDBsum" id="4V7Y"/>
<dbReference type="PDBsum" id="4V7Z"/>
<dbReference type="PDBsum" id="4V87"/>
<dbReference type="PDBsum" id="4V8A"/>
<dbReference type="PDBsum" id="4V8B"/>
<dbReference type="PDBsum" id="4V8C"/>
<dbReference type="PDBsum" id="4V8D"/>
<dbReference type="PDBsum" id="4V8E"/>
<dbReference type="PDBsum" id="4V8F"/>
<dbReference type="PDBsum" id="4V8G"/>
<dbReference type="PDBsum" id="4V8H"/>
<dbReference type="PDBsum" id="4V8I"/>
<dbReference type="PDBsum" id="4V8J"/>
<dbReference type="PDBsum" id="4V8N"/>
<dbReference type="PDBsum" id="4V8O"/>
<dbReference type="PDBsum" id="4V8Q"/>
<dbReference type="PDBsum" id="4V8U"/>
<dbReference type="PDBsum" id="4V8X"/>
<dbReference type="PDBsum" id="4V90"/>
<dbReference type="PDBsum" id="4V95"/>
<dbReference type="PDBsum" id="4V97"/>
<dbReference type="PDBsum" id="4V9A"/>
<dbReference type="PDBsum" id="4V9B"/>
<dbReference type="PDBsum" id="4V9H"/>
<dbReference type="PDBsum" id="4V9I"/>
<dbReference type="PDBsum" id="4V9R"/>
<dbReference type="PDBsum" id="4V9S"/>
<dbReference type="PDBsum" id="4W2E"/>
<dbReference type="PDBsum" id="4W2F"/>
<dbReference type="PDBsum" id="4W2G"/>
<dbReference type="PDBsum" id="4W2H"/>
<dbReference type="PDBsum" id="4W2I"/>
<dbReference type="PDBsum" id="4W4G"/>
<dbReference type="PDBsum" id="4WPO"/>
<dbReference type="PDBsum" id="4WQ1"/>
<dbReference type="PDBsum" id="4WQF"/>
<dbReference type="PDBsum" id="4WQR"/>
<dbReference type="PDBsum" id="4WQU"/>
<dbReference type="PDBsum" id="4WQY"/>
<dbReference type="PDBsum" id="4WR6"/>
<dbReference type="PDBsum" id="4WRA"/>
<dbReference type="PDBsum" id="4WRO"/>
<dbReference type="PDBsum" id="4WSD"/>
<dbReference type="PDBsum" id="4WSM"/>
<dbReference type="PDBsum" id="4WT1"/>
<dbReference type="PDBsum" id="4WT8"/>
<dbReference type="PDBsum" id="4WU1"/>
<dbReference type="PDBsum" id="4WZD"/>
<dbReference type="PDBsum" id="4WZO"/>
<dbReference type="PDBsum" id="4X62"/>
<dbReference type="PDBsum" id="4X64"/>
<dbReference type="PDBsum" id="4X65"/>
<dbReference type="PDBsum" id="4X66"/>
<dbReference type="PDBsum" id="4Y4O"/>
<dbReference type="PDBsum" id="4Y4P"/>
<dbReference type="PDBsum" id="4YHH"/>
<dbReference type="PDBsum" id="4YPB"/>
<dbReference type="PDBsum" id="4YY3"/>
<dbReference type="PDBsum" id="4YZV"/>
<dbReference type="PDBsum" id="4Z3S"/>
<dbReference type="PDBsum" id="4Z8C"/>
<dbReference type="PDBsum" id="4ZER"/>
<dbReference type="PDBsum" id="4ZSN"/>
<dbReference type="PDBsum" id="5A9Z"/>
<dbReference type="PDBsum" id="5AA0"/>
<dbReference type="PDBsum" id="5BR8"/>
<dbReference type="PDBsum" id="5CZP"/>
<dbReference type="PDBsum" id="5D8B"/>
<dbReference type="PDBsum" id="5DFE"/>
<dbReference type="PDBsum" id="5DOX"/>
<dbReference type="PDBsum" id="5DOY"/>
<dbReference type="PDBsum" id="5E7K"/>
<dbReference type="PDBsum" id="5E81"/>
<dbReference type="PDBsum" id="5EL4"/>
<dbReference type="PDBsum" id="5EL5"/>
<dbReference type="PDBsum" id="5EL6"/>
<dbReference type="PDBsum" id="5EL7"/>
<dbReference type="PDBsum" id="5F8K"/>
<dbReference type="PDBsum" id="5FDU"/>
<dbReference type="PDBsum" id="5FDV"/>
<dbReference type="PDBsum" id="5HAU"/>
<dbReference type="PDBsum" id="5HCP"/>
<dbReference type="PDBsum" id="5HCQ"/>
<dbReference type="PDBsum" id="5HCR"/>
<dbReference type="PDBsum" id="5HD1"/>
<dbReference type="PDBsum" id="5IB7"/>
<dbReference type="PDBsum" id="5IB8"/>
<dbReference type="PDBsum" id="5IBB"/>
<dbReference type="PDBsum" id="5IMQ"/>
<dbReference type="PDBsum" id="5IMR"/>
<dbReference type="PDBsum" id="5IWA"/>
<dbReference type="PDBsum" id="5J30"/>
<dbReference type="PDBsum" id="5J3C"/>
<dbReference type="PDBsum" id="5J4B"/>
<dbReference type="PDBsum" id="5J4C"/>
<dbReference type="PDBsum" id="5J8B"/>
<dbReference type="PDBsum" id="5LMN"/>
<dbReference type="PDBsum" id="5LMO"/>
<dbReference type="PDBsum" id="5LMP"/>
<dbReference type="PDBsum" id="5LMQ"/>
<dbReference type="PDBsum" id="5LMR"/>
<dbReference type="PDBsum" id="5LMS"/>
<dbReference type="PDBsum" id="5LMT"/>
<dbReference type="PDBsum" id="5LMU"/>
<dbReference type="PDBsum" id="5LMV"/>
<dbReference type="PDBsum" id="5NDJ"/>
<dbReference type="PDBsum" id="5NDK"/>
<dbReference type="PDBsum" id="5OT7"/>
<dbReference type="PDBsum" id="5UQ7"/>
<dbReference type="PDBsum" id="5UQ8"/>
<dbReference type="PDBsum" id="5VP2"/>
<dbReference type="PDBsum" id="5VPO"/>
<dbReference type="PDBsum" id="5VPP"/>
<dbReference type="PDBsum" id="5W4K"/>
<dbReference type="PDBsum" id="5WIS"/>
<dbReference type="PDBsum" id="5WIT"/>
<dbReference type="PDBsum" id="5WNP"/>
<dbReference type="PDBsum" id="5WNQ"/>
<dbReference type="PDBsum" id="5WNR"/>
<dbReference type="PDBsum" id="5WNS"/>
<dbReference type="PDBsum" id="5WNT"/>
<dbReference type="PDBsum" id="5WNU"/>
<dbReference type="PDBsum" id="5WNV"/>
<dbReference type="PDBsum" id="5ZLU"/>
<dbReference type="PDBsum" id="6BUW"/>
<dbReference type="PDBsum" id="6BZ6"/>
<dbReference type="PDBsum" id="6BZ7"/>
<dbReference type="PDBsum" id="6BZ8"/>
<dbReference type="PDBsum" id="6C5L"/>
<dbReference type="PDBsum" id="6CAE"/>
<dbReference type="PDBsum" id="6CAO"/>
<dbReference type="PDBsum" id="6CAP"/>
<dbReference type="PDBsum" id="6CAQ"/>
<dbReference type="PDBsum" id="6CAR"/>
<dbReference type="PDBsum" id="6CAS"/>
<dbReference type="PDBsum" id="6CFJ"/>
<dbReference type="PDBsum" id="6CFK"/>
<dbReference type="PDBsum" id="6CFL"/>
<dbReference type="PDBsum" id="6CZR"/>
<dbReference type="PDBsum" id="6DTI"/>
<dbReference type="PDBsum" id="6FKR"/>
<dbReference type="PDBsum" id="6GSJ"/>
<dbReference type="PDBsum" id="6GSK"/>
<dbReference type="PDBsum" id="6GSL"/>
<dbReference type="PDBsum" id="6GZQ"/>
<dbReference type="PDBsum" id="6GZX"/>
<dbReference type="PDBsum" id="6GZZ"/>
<dbReference type="PDBsum" id="6MKN"/>
<dbReference type="PDBsum" id="6MPF"/>
<dbReference type="PDBsum" id="6MPI"/>
<dbReference type="PDBsum" id="6N9E"/>
<dbReference type="PDBsum" id="6N9F"/>
<dbReference type="PDBsum" id="6ND5"/>
<dbReference type="PDBsum" id="6ND6"/>
<dbReference type="PDBsum" id="6NDK"/>
<dbReference type="PDBsum" id="6NSH"/>
<dbReference type="PDBsum" id="6NTA"/>
<dbReference type="PDBsum" id="6NUO"/>
<dbReference type="PDBsum" id="6NWY"/>
<dbReference type="PDBsum" id="6NY6"/>
<dbReference type="PDBsum" id="6O3M"/>
<dbReference type="PDBsum" id="6O97"/>
<dbReference type="PDBsum" id="6OF1"/>
<dbReference type="PDBsum" id="6OF6"/>
<dbReference type="PDBsum" id="6OJ2"/>
<dbReference type="PDBsum" id="6OPE"/>
<dbReference type="PDBsum" id="6ORD"/>
<dbReference type="PDBsum" id="6OSI"/>
<dbReference type="PDBsum" id="6OTR"/>
<dbReference type="PDBsum" id="6OXA"/>
<dbReference type="PDBsum" id="6OXI"/>
<dbReference type="PDBsum" id="6Q95"/>
<dbReference type="PDBsum" id="6QNQ"/>
<dbReference type="PDBsum" id="6QNR"/>
<dbReference type="PDBsum" id="6UCQ"/>
<dbReference type="PDBsum" id="6UO1"/>
<dbReference type="PDBsum" id="6XHV"/>
<dbReference type="PDBsum" id="6XHW"/>
<dbReference type="PDBsum" id="6XHX"/>
<dbReference type="PDBsum" id="6XHY"/>
<dbReference type="PDBsum" id="6XQD"/>
<dbReference type="PDBsum" id="6XQE"/>
<dbReference type="PDBsum" id="7AZO"/>
<dbReference type="PDBsum" id="7AZS"/>
<dbReference type="PDBsum" id="7DUG"/>
<dbReference type="PDBsum" id="7DUH"/>
<dbReference type="PDBsum" id="7DUI"/>
<dbReference type="PDBsum" id="7DUJ"/>
<dbReference type="PDBsum" id="7DUK"/>
<dbReference type="PDBsum" id="7DUL"/>
<dbReference type="PDBsum" id="7JQL"/>
<dbReference type="PDBsum" id="7JQM"/>
<dbReference type="PDBsum" id="7LH5"/>
<dbReference type="PDBsum" id="7MD7"/>
<dbReference type="PDBsum" id="7RQ8"/>
<dbReference type="PDBsum" id="7RQ9"/>
<dbReference type="PDBsum" id="7RQA"/>
<dbReference type="PDBsum" id="7RQB"/>
<dbReference type="PDBsum" id="7RQC"/>
<dbReference type="PDBsum" id="7RQD"/>
<dbReference type="PDBsum" id="7RQE"/>
<dbReference type="PDBsum" id="7U2H"/>
<dbReference type="PDBsum" id="7U2I"/>
<dbReference type="PDBsum" id="7U2J"/>
<dbReference type="PDBsum" id="7V2L"/>
<dbReference type="PDBsum" id="7V2M"/>
<dbReference type="PDBsum" id="7V2N"/>
<dbReference type="PDBsum" id="7V2O"/>
<dbReference type="PDBsum" id="7V2P"/>
<dbReference type="PDBsum" id="7V2Q"/>
<dbReference type="PDBsum" id="8CVJ"/>
<dbReference type="PDBsum" id="8CVK"/>
<dbReference type="PDBsum" id="8CVL"/>
<dbReference type="PDBsum" id="8EKB"/>
<dbReference type="PDBsum" id="8EV6"/>
<dbReference type="PDBsum" id="8EV7"/>
<dbReference type="PDBsum" id="8FC1"/>
<dbReference type="PDBsum" id="8FC2"/>
<dbReference type="PDBsum" id="8FC3"/>
<dbReference type="PDBsum" id="8FC4"/>
<dbReference type="PDBsum" id="8FC5"/>
<dbReference type="PDBsum" id="8FC6"/>
<dbReference type="PDBsum" id="8FOM"/>
<dbReference type="PDBsum" id="8FON"/>
<dbReference type="PDBsum" id="8G29"/>
<dbReference type="PDBsum" id="8G2A"/>
<dbReference type="PDBsum" id="8G2B"/>
<dbReference type="PDBsum" id="8G2C"/>
<dbReference type="PDBsum" id="8G2D"/>
<dbReference type="PDBsum" id="8T8B"/>
<dbReference type="PDBsum" id="8T8C"/>
<dbReference type="PDBsum" id="8UD6"/>
<dbReference type="PDBsum" id="8UD7"/>
<dbReference type="PDBsum" id="8UD8"/>
<dbReference type="PDBsum" id="8UVR"/>
<dbReference type="PDBsum" id="8UVS"/>
<dbReference type="PDBsum" id="8VTU"/>
<dbReference type="PDBsum" id="8VTV"/>
<dbReference type="PDBsum" id="8VTW"/>
<dbReference type="PDBsum" id="8VTX"/>
<dbReference type="PDBsum" id="8VTY"/>
<dbReference type="PDBsum" id="9B00"/>
<dbReference type="PDBsum" id="9D0J"/>
<dbReference type="PDBsum" id="9D7R"/>
<dbReference type="PDBsum" id="9D7S"/>
<dbReference type="PDBsum" id="9D7T"/>
<dbReference type="PDBsum" id="9DFC"/>
<dbReference type="PDBsum" id="9DFD"/>
<dbReference type="PDBsum" id="9DFE"/>
<dbReference type="EMDB" id="EMD-0101"/>
<dbReference type="EMDB" id="EMD-0104"/>
<dbReference type="EMDB" id="EMD-0105"/>
<dbReference type="EMDB" id="EMD-31655"/>
<dbReference type="EMDB" id="EMD-31656"/>
<dbReference type="EMDB" id="EMD-31657"/>
<dbReference type="EMDB" id="EMD-31658"/>
<dbReference type="EMDB" id="EMD-31659"/>
<dbReference type="EMDB" id="EMD-31660"/>
<dbReference type="EMDB" id="EMD-3852"/>
<dbReference type="EMDB" id="EMD-4073"/>
<dbReference type="EMDB" id="EMD-4074"/>
<dbReference type="EMDB" id="EMD-4075"/>
<dbReference type="EMDB" id="EMD-4076"/>
<dbReference type="EMDB" id="EMD-4077"/>
<dbReference type="EMDB" id="EMD-4078"/>
<dbReference type="EMDB" id="EMD-4079"/>
<dbReference type="EMDB" id="EMD-4080"/>
<dbReference type="EMDB" id="EMD-4083"/>
<dbReference type="EMDB" id="EMD-4475"/>
<dbReference type="EMDB" id="EMD-6934"/>
<dbReference type="EMDB" id="EMD-8596"/>
<dbReference type="EMDB" id="EMD-8597"/>
<dbReference type="SMR" id="Q5SHQ5"/>
<dbReference type="IntAct" id="Q5SHQ5">
    <property type="interactions" value="10"/>
</dbReference>
<dbReference type="DrugBank" id="DB08185">
    <property type="generic name" value="2-METHYLTHIO-N6-ISOPENTENYL-ADENOSINE-5'-MONOPHOSPHATE"/>
</dbReference>
<dbReference type="EnsemblBacteria" id="BAD71498">
    <property type="protein sequence ID" value="BAD71498"/>
    <property type="gene ID" value="BAD71498"/>
</dbReference>
<dbReference type="GeneID" id="3169827"/>
<dbReference type="KEGG" id="ttj:TTHA1675"/>
<dbReference type="PATRIC" id="fig|300852.9.peg.1645"/>
<dbReference type="eggNOG" id="COG0098">
    <property type="taxonomic scope" value="Bacteria"/>
</dbReference>
<dbReference type="HOGENOM" id="CLU_065898_2_2_0"/>
<dbReference type="PhylomeDB" id="Q5SHQ5"/>
<dbReference type="EvolutionaryTrace" id="Q5SHQ5"/>
<dbReference type="Proteomes" id="UP000000532">
    <property type="component" value="Chromosome"/>
</dbReference>
<dbReference type="GO" id="GO:0015935">
    <property type="term" value="C:small ribosomal subunit"/>
    <property type="evidence" value="ECO:0007669"/>
    <property type="project" value="InterPro"/>
</dbReference>
<dbReference type="GO" id="GO:0019843">
    <property type="term" value="F:rRNA binding"/>
    <property type="evidence" value="ECO:0007669"/>
    <property type="project" value="UniProtKB-UniRule"/>
</dbReference>
<dbReference type="GO" id="GO:0003735">
    <property type="term" value="F:structural constituent of ribosome"/>
    <property type="evidence" value="ECO:0007669"/>
    <property type="project" value="InterPro"/>
</dbReference>
<dbReference type="GO" id="GO:0006412">
    <property type="term" value="P:translation"/>
    <property type="evidence" value="ECO:0007669"/>
    <property type="project" value="UniProtKB-UniRule"/>
</dbReference>
<dbReference type="FunFam" id="3.30.230.10:FF:000002">
    <property type="entry name" value="30S ribosomal protein S5"/>
    <property type="match status" value="1"/>
</dbReference>
<dbReference type="Gene3D" id="3.30.160.20">
    <property type="match status" value="1"/>
</dbReference>
<dbReference type="Gene3D" id="3.30.230.10">
    <property type="match status" value="1"/>
</dbReference>
<dbReference type="HAMAP" id="MF_01307_B">
    <property type="entry name" value="Ribosomal_uS5_B"/>
    <property type="match status" value="1"/>
</dbReference>
<dbReference type="InterPro" id="IPR020568">
    <property type="entry name" value="Ribosomal_Su5_D2-typ_SF"/>
</dbReference>
<dbReference type="InterPro" id="IPR000851">
    <property type="entry name" value="Ribosomal_uS5"/>
</dbReference>
<dbReference type="InterPro" id="IPR005712">
    <property type="entry name" value="Ribosomal_uS5_bac-type"/>
</dbReference>
<dbReference type="InterPro" id="IPR005324">
    <property type="entry name" value="Ribosomal_uS5_C"/>
</dbReference>
<dbReference type="InterPro" id="IPR013810">
    <property type="entry name" value="Ribosomal_uS5_N"/>
</dbReference>
<dbReference type="InterPro" id="IPR018192">
    <property type="entry name" value="Ribosomal_uS5_N_CS"/>
</dbReference>
<dbReference type="InterPro" id="IPR014721">
    <property type="entry name" value="Ribsml_uS5_D2-typ_fold_subgr"/>
</dbReference>
<dbReference type="NCBIfam" id="TIGR01021">
    <property type="entry name" value="rpsE_bact"/>
    <property type="match status" value="1"/>
</dbReference>
<dbReference type="PANTHER" id="PTHR48277">
    <property type="entry name" value="MITOCHONDRIAL RIBOSOMAL PROTEIN S5"/>
    <property type="match status" value="1"/>
</dbReference>
<dbReference type="PANTHER" id="PTHR48277:SF1">
    <property type="entry name" value="MITOCHONDRIAL RIBOSOMAL PROTEIN S5"/>
    <property type="match status" value="1"/>
</dbReference>
<dbReference type="Pfam" id="PF00333">
    <property type="entry name" value="Ribosomal_S5"/>
    <property type="match status" value="1"/>
</dbReference>
<dbReference type="Pfam" id="PF03719">
    <property type="entry name" value="Ribosomal_S5_C"/>
    <property type="match status" value="1"/>
</dbReference>
<dbReference type="SUPFAM" id="SSF54768">
    <property type="entry name" value="dsRNA-binding domain-like"/>
    <property type="match status" value="1"/>
</dbReference>
<dbReference type="SUPFAM" id="SSF54211">
    <property type="entry name" value="Ribosomal protein S5 domain 2-like"/>
    <property type="match status" value="1"/>
</dbReference>
<dbReference type="PROSITE" id="PS00585">
    <property type="entry name" value="RIBOSOMAL_S5"/>
    <property type="match status" value="1"/>
</dbReference>
<dbReference type="PROSITE" id="PS50881">
    <property type="entry name" value="S5_DSRBD"/>
    <property type="match status" value="1"/>
</dbReference>
<name>RS5_THET8</name>